<dbReference type="EC" id="2.7.11.1" evidence="52"/>
<dbReference type="EMBL" id="AF086904">
    <property type="protein sequence ID" value="AAC83693.1"/>
    <property type="molecule type" value="mRNA"/>
</dbReference>
<dbReference type="EMBL" id="AJ131197">
    <property type="protein sequence ID" value="CAA10319.1"/>
    <property type="molecule type" value="mRNA"/>
</dbReference>
<dbReference type="EMBL" id="AF096279">
    <property type="protein sequence ID" value="AAD11784.1"/>
    <property type="molecule type" value="mRNA"/>
</dbReference>
<dbReference type="EMBL" id="AY551295">
    <property type="protein sequence ID" value="AAS58456.1"/>
    <property type="molecule type" value="mRNA"/>
</dbReference>
<dbReference type="EMBL" id="AY551296">
    <property type="protein sequence ID" value="AAS58457.1"/>
    <property type="molecule type" value="mRNA"/>
</dbReference>
<dbReference type="EMBL" id="AY551297">
    <property type="protein sequence ID" value="AAS58458.1"/>
    <property type="molecule type" value="mRNA"/>
</dbReference>
<dbReference type="EMBL" id="AY551298">
    <property type="protein sequence ID" value="AAS58459.1"/>
    <property type="molecule type" value="mRNA"/>
</dbReference>
<dbReference type="EMBL" id="AY551299">
    <property type="protein sequence ID" value="AAS58460.1"/>
    <property type="molecule type" value="mRNA"/>
</dbReference>
<dbReference type="EMBL" id="AY551300">
    <property type="protein sequence ID" value="AAS58461.1"/>
    <property type="molecule type" value="mRNA"/>
</dbReference>
<dbReference type="EMBL" id="AY551301">
    <property type="protein sequence ID" value="AAS58462.1"/>
    <property type="molecule type" value="mRNA"/>
</dbReference>
<dbReference type="EMBL" id="AY551302">
    <property type="protein sequence ID" value="AAS58463.1"/>
    <property type="molecule type" value="mRNA"/>
</dbReference>
<dbReference type="EMBL" id="AY551303">
    <property type="protein sequence ID" value="AAS58464.1"/>
    <property type="molecule type" value="mRNA"/>
</dbReference>
<dbReference type="EMBL" id="AY551304">
    <property type="protein sequence ID" value="AAS58465.1"/>
    <property type="molecule type" value="mRNA"/>
</dbReference>
<dbReference type="EMBL" id="AY551305">
    <property type="protein sequence ID" value="AAS58466.1"/>
    <property type="molecule type" value="mRNA"/>
</dbReference>
<dbReference type="EMBL" id="CR456418">
    <property type="protein sequence ID" value="CAG30304.1"/>
    <property type="molecule type" value="mRNA"/>
</dbReference>
<dbReference type="EMBL" id="AF174135">
    <property type="protein sequence ID" value="AAD48504.1"/>
    <property type="molecule type" value="mRNA"/>
</dbReference>
<dbReference type="EMBL" id="AB040105">
    <property type="protein sequence ID" value="BAB17231.1"/>
    <property type="molecule type" value="mRNA"/>
</dbReference>
<dbReference type="EMBL" id="AK290754">
    <property type="protein sequence ID" value="BAF83443.1"/>
    <property type="molecule type" value="mRNA"/>
</dbReference>
<dbReference type="EMBL" id="AF217975">
    <property type="protein sequence ID" value="AAG17218.1"/>
    <property type="molecule type" value="mRNA"/>
</dbReference>
<dbReference type="EMBL" id="AY800241">
    <property type="protein sequence ID" value="AAV41895.1"/>
    <property type="molecule type" value="Genomic_DNA"/>
</dbReference>
<dbReference type="EMBL" id="AL117330">
    <property type="status" value="NOT_ANNOTATED_CDS"/>
    <property type="molecule type" value="Genomic_DNA"/>
</dbReference>
<dbReference type="EMBL" id="AL121825">
    <property type="status" value="NOT_ANNOTATED_CDS"/>
    <property type="molecule type" value="Genomic_DNA"/>
</dbReference>
<dbReference type="EMBL" id="CH471095">
    <property type="protein sequence ID" value="EAW59755.1"/>
    <property type="molecule type" value="Genomic_DNA"/>
</dbReference>
<dbReference type="EMBL" id="BC004207">
    <property type="protein sequence ID" value="AAH04207.1"/>
    <property type="molecule type" value="mRNA"/>
</dbReference>
<dbReference type="CCDS" id="CCDS13843.1">
    <molecule id="O96017-1"/>
</dbReference>
<dbReference type="CCDS" id="CCDS13844.1">
    <molecule id="O96017-12"/>
</dbReference>
<dbReference type="CCDS" id="CCDS33629.1">
    <molecule id="O96017-9"/>
</dbReference>
<dbReference type="RefSeq" id="NP_001005735.1">
    <molecule id="O96017-9"/>
    <property type="nucleotide sequence ID" value="NM_001005735.2"/>
</dbReference>
<dbReference type="RefSeq" id="NP_001244316.1">
    <molecule id="O96017-13"/>
    <property type="nucleotide sequence ID" value="NM_001257387.2"/>
</dbReference>
<dbReference type="RefSeq" id="NP_009125.1">
    <molecule id="O96017-1"/>
    <property type="nucleotide sequence ID" value="NM_007194.4"/>
</dbReference>
<dbReference type="RefSeq" id="NP_665861.1">
    <molecule id="O96017-12"/>
    <property type="nucleotide sequence ID" value="NM_145862.2"/>
</dbReference>
<dbReference type="RefSeq" id="XP_011528147.1">
    <molecule id="O96017-13"/>
    <property type="nucleotide sequence ID" value="XM_011529845.3"/>
</dbReference>
<dbReference type="RefSeq" id="XP_016884050.1">
    <property type="nucleotide sequence ID" value="XM_017028561.1"/>
</dbReference>
<dbReference type="RefSeq" id="XP_054181026.1">
    <molecule id="O96017-13"/>
    <property type="nucleotide sequence ID" value="XM_054325051.1"/>
</dbReference>
<dbReference type="PDB" id="1GXC">
    <property type="method" value="X-ray"/>
    <property type="resolution" value="2.70 A"/>
    <property type="chains" value="A/D/G/J=64-212"/>
</dbReference>
<dbReference type="PDB" id="2CN5">
    <property type="method" value="X-ray"/>
    <property type="resolution" value="2.25 A"/>
    <property type="chains" value="A=210-531"/>
</dbReference>
<dbReference type="PDB" id="2CN8">
    <property type="method" value="X-ray"/>
    <property type="resolution" value="2.70 A"/>
    <property type="chains" value="A=210-531"/>
</dbReference>
<dbReference type="PDB" id="2W0J">
    <property type="method" value="X-ray"/>
    <property type="resolution" value="2.05 A"/>
    <property type="chains" value="A=210-531"/>
</dbReference>
<dbReference type="PDB" id="2W7X">
    <property type="method" value="X-ray"/>
    <property type="resolution" value="2.07 A"/>
    <property type="chains" value="A=210-531"/>
</dbReference>
<dbReference type="PDB" id="2WTC">
    <property type="method" value="X-ray"/>
    <property type="resolution" value="3.00 A"/>
    <property type="chains" value="A=210-531"/>
</dbReference>
<dbReference type="PDB" id="2WTD">
    <property type="method" value="X-ray"/>
    <property type="resolution" value="2.75 A"/>
    <property type="chains" value="A=210-531"/>
</dbReference>
<dbReference type="PDB" id="2WTI">
    <property type="method" value="X-ray"/>
    <property type="resolution" value="2.50 A"/>
    <property type="chains" value="A=210-531"/>
</dbReference>
<dbReference type="PDB" id="2WTJ">
    <property type="method" value="X-ray"/>
    <property type="resolution" value="2.10 A"/>
    <property type="chains" value="A=210-531"/>
</dbReference>
<dbReference type="PDB" id="2XBJ">
    <property type="method" value="X-ray"/>
    <property type="resolution" value="2.30 A"/>
    <property type="chains" value="A=210-531"/>
</dbReference>
<dbReference type="PDB" id="2XK9">
    <property type="method" value="X-ray"/>
    <property type="resolution" value="2.35 A"/>
    <property type="chains" value="A=210-531"/>
</dbReference>
<dbReference type="PDB" id="2XM8">
    <property type="method" value="X-ray"/>
    <property type="resolution" value="3.40 A"/>
    <property type="chains" value="A=210-531"/>
</dbReference>
<dbReference type="PDB" id="2XM9">
    <property type="method" value="X-ray"/>
    <property type="resolution" value="2.50 A"/>
    <property type="chains" value="A=210-531"/>
</dbReference>
<dbReference type="PDB" id="2YCF">
    <property type="method" value="X-ray"/>
    <property type="resolution" value="1.77 A"/>
    <property type="chains" value="A=210-530"/>
</dbReference>
<dbReference type="PDB" id="2YCQ">
    <property type="method" value="X-ray"/>
    <property type="resolution" value="2.05 A"/>
    <property type="chains" value="A=210-531"/>
</dbReference>
<dbReference type="PDB" id="2YCR">
    <property type="method" value="X-ray"/>
    <property type="resolution" value="2.20 A"/>
    <property type="chains" value="A=210-531"/>
</dbReference>
<dbReference type="PDB" id="2YCS">
    <property type="method" value="X-ray"/>
    <property type="resolution" value="2.35 A"/>
    <property type="chains" value="A=210-531"/>
</dbReference>
<dbReference type="PDB" id="2YIQ">
    <property type="method" value="X-ray"/>
    <property type="resolution" value="1.89 A"/>
    <property type="chains" value="A=210-531"/>
</dbReference>
<dbReference type="PDB" id="2YIR">
    <property type="method" value="X-ray"/>
    <property type="resolution" value="2.10 A"/>
    <property type="chains" value="A=210-531"/>
</dbReference>
<dbReference type="PDB" id="2YIT">
    <property type="method" value="X-ray"/>
    <property type="resolution" value="2.20 A"/>
    <property type="chains" value="A=210-531"/>
</dbReference>
<dbReference type="PDB" id="3I6U">
    <property type="method" value="X-ray"/>
    <property type="resolution" value="3.00 A"/>
    <property type="chains" value="A/B=84-502"/>
</dbReference>
<dbReference type="PDB" id="3I6W">
    <property type="method" value="X-ray"/>
    <property type="resolution" value="3.25 A"/>
    <property type="chains" value="A/B/C/D/E/F/G/H=70-512"/>
</dbReference>
<dbReference type="PDB" id="3VA4">
    <property type="method" value="X-ray"/>
    <property type="resolution" value="1.54 A"/>
    <property type="chains" value="C=63-73"/>
</dbReference>
<dbReference type="PDB" id="4A9R">
    <property type="method" value="X-ray"/>
    <property type="resolution" value="2.85 A"/>
    <property type="chains" value="A=210-531"/>
</dbReference>
<dbReference type="PDB" id="4A9S">
    <property type="method" value="X-ray"/>
    <property type="resolution" value="2.66 A"/>
    <property type="chains" value="A=210-531"/>
</dbReference>
<dbReference type="PDB" id="4A9T">
    <property type="method" value="X-ray"/>
    <property type="resolution" value="2.70 A"/>
    <property type="chains" value="A=210-531"/>
</dbReference>
<dbReference type="PDB" id="4A9U">
    <property type="method" value="X-ray"/>
    <property type="resolution" value="2.48 A"/>
    <property type="chains" value="A=210-531"/>
</dbReference>
<dbReference type="PDB" id="4BDA">
    <property type="method" value="X-ray"/>
    <property type="resolution" value="2.60 A"/>
    <property type="chains" value="A=210-531"/>
</dbReference>
<dbReference type="PDB" id="4BDB">
    <property type="method" value="X-ray"/>
    <property type="resolution" value="2.50 A"/>
    <property type="chains" value="A=210-531"/>
</dbReference>
<dbReference type="PDB" id="4BDC">
    <property type="method" value="X-ray"/>
    <property type="resolution" value="3.00 A"/>
    <property type="chains" value="A=210-531"/>
</dbReference>
<dbReference type="PDB" id="4BDD">
    <property type="method" value="X-ray"/>
    <property type="resolution" value="2.67 A"/>
    <property type="chains" value="A=210-531"/>
</dbReference>
<dbReference type="PDB" id="4BDE">
    <property type="method" value="X-ray"/>
    <property type="resolution" value="2.55 A"/>
    <property type="chains" value="A=210-531"/>
</dbReference>
<dbReference type="PDB" id="4BDF">
    <property type="method" value="X-ray"/>
    <property type="resolution" value="2.70 A"/>
    <property type="chains" value="A=210-531"/>
</dbReference>
<dbReference type="PDB" id="4BDG">
    <property type="method" value="X-ray"/>
    <property type="resolution" value="2.84 A"/>
    <property type="chains" value="A=210-531"/>
</dbReference>
<dbReference type="PDB" id="4BDH">
    <property type="method" value="X-ray"/>
    <property type="resolution" value="2.70 A"/>
    <property type="chains" value="A=210-531"/>
</dbReference>
<dbReference type="PDB" id="4BDI">
    <property type="method" value="X-ray"/>
    <property type="resolution" value="2.32 A"/>
    <property type="chains" value="A=210-531"/>
</dbReference>
<dbReference type="PDB" id="4BDJ">
    <property type="method" value="X-ray"/>
    <property type="resolution" value="3.01 A"/>
    <property type="chains" value="A=210-531"/>
</dbReference>
<dbReference type="PDB" id="4BDK">
    <property type="method" value="X-ray"/>
    <property type="resolution" value="3.30 A"/>
    <property type="chains" value="A=210-531"/>
</dbReference>
<dbReference type="PDBsum" id="1GXC"/>
<dbReference type="PDBsum" id="2CN5"/>
<dbReference type="PDBsum" id="2CN8"/>
<dbReference type="PDBsum" id="2W0J"/>
<dbReference type="PDBsum" id="2W7X"/>
<dbReference type="PDBsum" id="2WTC"/>
<dbReference type="PDBsum" id="2WTD"/>
<dbReference type="PDBsum" id="2WTI"/>
<dbReference type="PDBsum" id="2WTJ"/>
<dbReference type="PDBsum" id="2XBJ"/>
<dbReference type="PDBsum" id="2XK9"/>
<dbReference type="PDBsum" id="2XM8"/>
<dbReference type="PDBsum" id="2XM9"/>
<dbReference type="PDBsum" id="2YCF"/>
<dbReference type="PDBsum" id="2YCQ"/>
<dbReference type="PDBsum" id="2YCR"/>
<dbReference type="PDBsum" id="2YCS"/>
<dbReference type="PDBsum" id="2YIQ"/>
<dbReference type="PDBsum" id="2YIR"/>
<dbReference type="PDBsum" id="2YIT"/>
<dbReference type="PDBsum" id="3I6U"/>
<dbReference type="PDBsum" id="3I6W"/>
<dbReference type="PDBsum" id="3VA4"/>
<dbReference type="PDBsum" id="4A9R"/>
<dbReference type="PDBsum" id="4A9S"/>
<dbReference type="PDBsum" id="4A9T"/>
<dbReference type="PDBsum" id="4A9U"/>
<dbReference type="PDBsum" id="4BDA"/>
<dbReference type="PDBsum" id="4BDB"/>
<dbReference type="PDBsum" id="4BDC"/>
<dbReference type="PDBsum" id="4BDD"/>
<dbReference type="PDBsum" id="4BDE"/>
<dbReference type="PDBsum" id="4BDF"/>
<dbReference type="PDBsum" id="4BDG"/>
<dbReference type="PDBsum" id="4BDH"/>
<dbReference type="PDBsum" id="4BDI"/>
<dbReference type="PDBsum" id="4BDJ"/>
<dbReference type="PDBsum" id="4BDK"/>
<dbReference type="SMR" id="O96017"/>
<dbReference type="BioGRID" id="116369">
    <property type="interactions" value="254"/>
</dbReference>
<dbReference type="CORUM" id="O96017"/>
<dbReference type="DIP" id="DIP-24270N"/>
<dbReference type="ELM" id="O96017"/>
<dbReference type="FunCoup" id="O96017">
    <property type="interactions" value="2619"/>
</dbReference>
<dbReference type="IntAct" id="O96017">
    <property type="interactions" value="150"/>
</dbReference>
<dbReference type="MINT" id="O96017"/>
<dbReference type="STRING" id="9606.ENSP00000372023"/>
<dbReference type="BindingDB" id="O96017"/>
<dbReference type="ChEMBL" id="CHEMBL2527"/>
<dbReference type="DrugBank" id="DB04367">
    <property type="generic name" value="Debromohymenialdisine"/>
</dbReference>
<dbReference type="DrugBank" id="DB06486">
    <property type="generic name" value="Enzastaurin"/>
</dbReference>
<dbReference type="DrugBank" id="DB12010">
    <property type="generic name" value="Fostamatinib"/>
</dbReference>
<dbReference type="DrugBank" id="DB05786">
    <property type="generic name" value="Irofulven"/>
</dbReference>
<dbReference type="DrugBank" id="DB05149">
    <property type="generic name" value="XL844"/>
</dbReference>
<dbReference type="DrugCentral" id="O96017"/>
<dbReference type="GuidetoPHARMACOLOGY" id="1988"/>
<dbReference type="GlyGen" id="O96017">
    <property type="glycosylation" value="4 sites, 1 O-linked glycan (1 site)"/>
</dbReference>
<dbReference type="iPTMnet" id="O96017"/>
<dbReference type="MetOSite" id="O96017"/>
<dbReference type="PhosphoSitePlus" id="O96017"/>
<dbReference type="BioMuta" id="CHEK2"/>
<dbReference type="CPTAC" id="CPTAC-5892"/>
<dbReference type="CPTAC" id="CPTAC-5893"/>
<dbReference type="CPTAC" id="CPTAC-5894"/>
<dbReference type="jPOST" id="O96017"/>
<dbReference type="MassIVE" id="O96017"/>
<dbReference type="PaxDb" id="9606-ENSP00000372023"/>
<dbReference type="PeptideAtlas" id="O96017"/>
<dbReference type="ProteomicsDB" id="51198">
    <molecule id="O96017-1"/>
</dbReference>
<dbReference type="ProteomicsDB" id="51199">
    <molecule id="O96017-10"/>
</dbReference>
<dbReference type="ProteomicsDB" id="51200">
    <molecule id="O96017-11"/>
</dbReference>
<dbReference type="ProteomicsDB" id="51201">
    <molecule id="O96017-12"/>
</dbReference>
<dbReference type="ProteomicsDB" id="51202">
    <molecule id="O96017-2"/>
</dbReference>
<dbReference type="ProteomicsDB" id="51203">
    <molecule id="O96017-3"/>
</dbReference>
<dbReference type="ProteomicsDB" id="51204">
    <molecule id="O96017-4"/>
</dbReference>
<dbReference type="ProteomicsDB" id="51205">
    <molecule id="O96017-5"/>
</dbReference>
<dbReference type="ProteomicsDB" id="51206">
    <molecule id="O96017-6"/>
</dbReference>
<dbReference type="ProteomicsDB" id="51207">
    <molecule id="O96017-7"/>
</dbReference>
<dbReference type="ProteomicsDB" id="51208">
    <molecule id="O96017-8"/>
</dbReference>
<dbReference type="ProteomicsDB" id="51209">
    <molecule id="O96017-9"/>
</dbReference>
<dbReference type="ProteomicsDB" id="81589"/>
<dbReference type="Pumba" id="O96017"/>
<dbReference type="ABCD" id="O96017">
    <property type="antibodies" value="1 sequenced antibody"/>
</dbReference>
<dbReference type="Antibodypedia" id="278">
    <property type="antibodies" value="2025 antibodies from 50 providers"/>
</dbReference>
<dbReference type="CPTC" id="O96017">
    <property type="antibodies" value="2 antibodies"/>
</dbReference>
<dbReference type="DNASU" id="11200"/>
<dbReference type="Ensembl" id="ENST00000348295.7">
    <molecule id="O96017-12"/>
    <property type="protein sequence ID" value="ENSP00000329012.5"/>
    <property type="gene ID" value="ENSG00000183765.24"/>
</dbReference>
<dbReference type="Ensembl" id="ENST00000382580.6">
    <molecule id="O96017-9"/>
    <property type="protein sequence ID" value="ENSP00000372023.2"/>
    <property type="gene ID" value="ENSG00000183765.24"/>
</dbReference>
<dbReference type="Ensembl" id="ENST00000403642.5">
    <molecule id="O96017-4"/>
    <property type="protein sequence ID" value="ENSP00000384919.1"/>
    <property type="gene ID" value="ENSG00000183765.24"/>
</dbReference>
<dbReference type="Ensembl" id="ENST00000404276.6">
    <molecule id="O96017-1"/>
    <property type="protein sequence ID" value="ENSP00000385747.1"/>
    <property type="gene ID" value="ENSG00000183765.24"/>
</dbReference>
<dbReference type="Ensembl" id="ENST00000405598.5">
    <molecule id="O96017-1"/>
    <property type="protein sequence ID" value="ENSP00000386087.1"/>
    <property type="gene ID" value="ENSG00000183765.24"/>
</dbReference>
<dbReference type="Ensembl" id="ENST00000417588.5">
    <molecule id="O96017-5"/>
    <property type="protein sequence ID" value="ENSP00000412901.1"/>
    <property type="gene ID" value="ENSG00000183765.24"/>
</dbReference>
<dbReference type="Ensembl" id="ENST00000425190.7">
    <molecule id="O96017-13"/>
    <property type="protein sequence ID" value="ENSP00000390244.2"/>
    <property type="gene ID" value="ENSG00000183765.24"/>
</dbReference>
<dbReference type="Ensembl" id="ENST00000433728.5">
    <molecule id="O96017-8"/>
    <property type="protein sequence ID" value="ENSP00000404400.1"/>
    <property type="gene ID" value="ENSG00000183765.24"/>
</dbReference>
<dbReference type="Ensembl" id="ENST00000439346.6">
    <molecule id="O96017-5"/>
    <property type="protein sequence ID" value="ENSP00000396903.2"/>
    <property type="gene ID" value="ENSG00000183765.24"/>
</dbReference>
<dbReference type="Ensembl" id="ENST00000448511.5">
    <molecule id="O96017-6"/>
    <property type="protein sequence ID" value="ENSP00000404567.1"/>
    <property type="gene ID" value="ENSG00000183765.24"/>
</dbReference>
<dbReference type="Ensembl" id="ENST00000649563.1">
    <molecule id="O96017-13"/>
    <property type="protein sequence ID" value="ENSP00000496928.1"/>
    <property type="gene ID" value="ENSG00000183765.24"/>
</dbReference>
<dbReference type="Ensembl" id="ENST00000650281.1">
    <molecule id="O96017-1"/>
    <property type="protein sequence ID" value="ENSP00000497000.1"/>
    <property type="gene ID" value="ENSG00000183765.24"/>
</dbReference>
<dbReference type="GeneID" id="11200"/>
<dbReference type="KEGG" id="hsa:11200"/>
<dbReference type="MANE-Select" id="ENST00000404276.6">
    <property type="protein sequence ID" value="ENSP00000385747.1"/>
    <property type="RefSeq nucleotide sequence ID" value="NM_007194.4"/>
    <property type="RefSeq protein sequence ID" value="NP_009125.1"/>
</dbReference>
<dbReference type="UCSC" id="uc003adt.2">
    <molecule id="O96017-1"/>
    <property type="organism name" value="human"/>
</dbReference>
<dbReference type="AGR" id="HGNC:16627"/>
<dbReference type="CTD" id="11200"/>
<dbReference type="DisGeNET" id="11200"/>
<dbReference type="GeneCards" id="CHEK2"/>
<dbReference type="HGNC" id="HGNC:16627">
    <property type="gene designation" value="CHEK2"/>
</dbReference>
<dbReference type="HPA" id="ENSG00000183765">
    <property type="expression patterns" value="Low tissue specificity"/>
</dbReference>
<dbReference type="MalaCards" id="CHEK2"/>
<dbReference type="MIM" id="114480">
    <property type="type" value="phenotype"/>
</dbReference>
<dbReference type="MIM" id="176807">
    <property type="type" value="phenotype"/>
</dbReference>
<dbReference type="MIM" id="259500">
    <property type="type" value="phenotype"/>
</dbReference>
<dbReference type="MIM" id="604373">
    <property type="type" value="gene"/>
</dbReference>
<dbReference type="MIM" id="609265">
    <property type="type" value="phenotype"/>
</dbReference>
<dbReference type="neXtProt" id="NX_O96017"/>
<dbReference type="OpenTargets" id="ENSG00000183765"/>
<dbReference type="Orphanet" id="440437">
    <property type="disease" value="Familial colorectal cancer Type X"/>
</dbReference>
<dbReference type="Orphanet" id="1331">
    <property type="disease" value="Familial prostate cancer"/>
</dbReference>
<dbReference type="Orphanet" id="145">
    <property type="disease" value="Hereditary breast and/or ovarian cancer syndrome"/>
</dbReference>
<dbReference type="Orphanet" id="524">
    <property type="disease" value="Li-Fraumeni syndrome"/>
</dbReference>
<dbReference type="Orphanet" id="668">
    <property type="disease" value="Osteosarcoma"/>
</dbReference>
<dbReference type="PharmGKB" id="PA404"/>
<dbReference type="VEuPathDB" id="HostDB:ENSG00000183765"/>
<dbReference type="eggNOG" id="KOG0615">
    <property type="taxonomic scope" value="Eukaryota"/>
</dbReference>
<dbReference type="GeneTree" id="ENSGT00800000124190"/>
<dbReference type="HOGENOM" id="CLU_070593_1_0_1"/>
<dbReference type="InParanoid" id="O96017"/>
<dbReference type="OMA" id="MLCAVQY"/>
<dbReference type="OrthoDB" id="40902at2759"/>
<dbReference type="PAN-GO" id="O96017">
    <property type="GO annotations" value="4 GO annotations based on evolutionary models"/>
</dbReference>
<dbReference type="PhylomeDB" id="O96017"/>
<dbReference type="TreeFam" id="TF101082"/>
<dbReference type="BRENDA" id="2.7.11.1">
    <property type="organism ID" value="2681"/>
</dbReference>
<dbReference type="PathwayCommons" id="O96017"/>
<dbReference type="Reactome" id="R-HSA-5693565">
    <property type="pathway name" value="Recruitment and ATM-mediated phosphorylation of repair and signaling proteins at DNA double strand breaks"/>
</dbReference>
<dbReference type="Reactome" id="R-HSA-6804756">
    <property type="pathway name" value="Regulation of TP53 Activity through Phosphorylation"/>
</dbReference>
<dbReference type="Reactome" id="R-HSA-6804757">
    <property type="pathway name" value="Regulation of TP53 Degradation"/>
</dbReference>
<dbReference type="Reactome" id="R-HSA-6804760">
    <property type="pathway name" value="Regulation of TP53 Activity through Methylation"/>
</dbReference>
<dbReference type="Reactome" id="R-HSA-69473">
    <property type="pathway name" value="G2/M DNA damage checkpoint"/>
</dbReference>
<dbReference type="Reactome" id="R-HSA-69541">
    <property type="pathway name" value="Stabilization of p53"/>
</dbReference>
<dbReference type="Reactome" id="R-HSA-69601">
    <property type="pathway name" value="Ubiquitin Mediated Degradation of Phosphorylated Cdc25A"/>
</dbReference>
<dbReference type="Reactome" id="R-HSA-75035">
    <property type="pathway name" value="Chk1/Chk2(Cds1) mediated inactivation of Cyclin B:Cdk1 complex"/>
</dbReference>
<dbReference type="SignaLink" id="O96017"/>
<dbReference type="SIGNOR" id="O96017"/>
<dbReference type="BioGRID-ORCS" id="11200">
    <property type="hits" value="24 hits in 1201 CRISPR screens"/>
</dbReference>
<dbReference type="CD-CODE" id="8C2F96ED">
    <property type="entry name" value="Centrosome"/>
</dbReference>
<dbReference type="ChiTaRS" id="CHEK2">
    <property type="organism name" value="human"/>
</dbReference>
<dbReference type="EvolutionaryTrace" id="O96017"/>
<dbReference type="GeneWiki" id="CHEK2"/>
<dbReference type="GenomeRNAi" id="11200"/>
<dbReference type="Pharos" id="O96017">
    <property type="development level" value="Tchem"/>
</dbReference>
<dbReference type="PRO" id="PR:O96017"/>
<dbReference type="Proteomes" id="UP000005640">
    <property type="component" value="Chromosome 22"/>
</dbReference>
<dbReference type="RNAct" id="O96017">
    <property type="molecule type" value="protein"/>
</dbReference>
<dbReference type="Bgee" id="ENSG00000183765">
    <property type="expression patterns" value="Expressed in primordial germ cell in gonad and 107 other cell types or tissues"/>
</dbReference>
<dbReference type="ExpressionAtlas" id="O96017">
    <property type="expression patterns" value="baseline and differential"/>
</dbReference>
<dbReference type="GO" id="GO:0005737">
    <property type="term" value="C:cytoplasm"/>
    <property type="evidence" value="ECO:0000318"/>
    <property type="project" value="GO_Central"/>
</dbReference>
<dbReference type="GO" id="GO:0005794">
    <property type="term" value="C:Golgi apparatus"/>
    <property type="evidence" value="ECO:0000314"/>
    <property type="project" value="HPA"/>
</dbReference>
<dbReference type="GO" id="GO:0005654">
    <property type="term" value="C:nucleoplasm"/>
    <property type="evidence" value="ECO:0000314"/>
    <property type="project" value="HPA"/>
</dbReference>
<dbReference type="GO" id="GO:0005634">
    <property type="term" value="C:nucleus"/>
    <property type="evidence" value="ECO:0000318"/>
    <property type="project" value="GO_Central"/>
</dbReference>
<dbReference type="GO" id="GO:0016605">
    <property type="term" value="C:PML body"/>
    <property type="evidence" value="ECO:0000314"/>
    <property type="project" value="UniProtKB"/>
</dbReference>
<dbReference type="GO" id="GO:0005524">
    <property type="term" value="F:ATP binding"/>
    <property type="evidence" value="ECO:0007669"/>
    <property type="project" value="UniProtKB-KW"/>
</dbReference>
<dbReference type="GO" id="GO:0042802">
    <property type="term" value="F:identical protein binding"/>
    <property type="evidence" value="ECO:0000353"/>
    <property type="project" value="IntAct"/>
</dbReference>
<dbReference type="GO" id="GO:0046872">
    <property type="term" value="F:metal ion binding"/>
    <property type="evidence" value="ECO:0007669"/>
    <property type="project" value="UniProtKB-KW"/>
</dbReference>
<dbReference type="GO" id="GO:0042803">
    <property type="term" value="F:protein homodimerization activity"/>
    <property type="evidence" value="ECO:0000314"/>
    <property type="project" value="UniProtKB"/>
</dbReference>
<dbReference type="GO" id="GO:0019901">
    <property type="term" value="F:protein kinase binding"/>
    <property type="evidence" value="ECO:0000353"/>
    <property type="project" value="UniProtKB"/>
</dbReference>
<dbReference type="GO" id="GO:0106310">
    <property type="term" value="F:protein serine kinase activity"/>
    <property type="evidence" value="ECO:0007669"/>
    <property type="project" value="RHEA"/>
</dbReference>
<dbReference type="GO" id="GO:0004674">
    <property type="term" value="F:protein serine/threonine kinase activity"/>
    <property type="evidence" value="ECO:0000314"/>
    <property type="project" value="UniProtKB"/>
</dbReference>
<dbReference type="GO" id="GO:0031625">
    <property type="term" value="F:ubiquitin protein ligase binding"/>
    <property type="evidence" value="ECO:0000353"/>
    <property type="project" value="UniProtKB"/>
</dbReference>
<dbReference type="GO" id="GO:0051301">
    <property type="term" value="P:cell division"/>
    <property type="evidence" value="ECO:0007669"/>
    <property type="project" value="UniProtKB-KW"/>
</dbReference>
<dbReference type="GO" id="GO:1903926">
    <property type="term" value="P:cellular response to bisphenol A"/>
    <property type="evidence" value="ECO:0007669"/>
    <property type="project" value="Ensembl"/>
</dbReference>
<dbReference type="GO" id="GO:0071480">
    <property type="term" value="P:cellular response to gamma radiation"/>
    <property type="evidence" value="ECO:0007669"/>
    <property type="project" value="Ensembl"/>
</dbReference>
<dbReference type="GO" id="GO:0033554">
    <property type="term" value="P:cellular response to stress"/>
    <property type="evidence" value="ECO:0000314"/>
    <property type="project" value="UniProt"/>
</dbReference>
<dbReference type="GO" id="GO:0071466">
    <property type="term" value="P:cellular response to xenobiotic stimulus"/>
    <property type="evidence" value="ECO:0007669"/>
    <property type="project" value="Ensembl"/>
</dbReference>
<dbReference type="GO" id="GO:0000077">
    <property type="term" value="P:DNA damage checkpoint signaling"/>
    <property type="evidence" value="ECO:0000304"/>
    <property type="project" value="UniProtKB"/>
</dbReference>
<dbReference type="GO" id="GO:0006974">
    <property type="term" value="P:DNA damage response"/>
    <property type="evidence" value="ECO:0000314"/>
    <property type="project" value="MGI"/>
</dbReference>
<dbReference type="GO" id="GO:0030330">
    <property type="term" value="P:DNA damage response, signal transduction by p53 class mediator"/>
    <property type="evidence" value="ECO:0000304"/>
    <property type="project" value="Reactome"/>
</dbReference>
<dbReference type="GO" id="GO:0006302">
    <property type="term" value="P:double-strand break repair"/>
    <property type="evidence" value="ECO:0000315"/>
    <property type="project" value="UniProtKB"/>
</dbReference>
<dbReference type="GO" id="GO:0000086">
    <property type="term" value="P:G2/M transition of mitotic cell cycle"/>
    <property type="evidence" value="ECO:0000315"/>
    <property type="project" value="UniProtKB"/>
</dbReference>
<dbReference type="GO" id="GO:0008630">
    <property type="term" value="P:intrinsic apoptotic signaling pathway in response to DNA damage"/>
    <property type="evidence" value="ECO:0000314"/>
    <property type="project" value="UniProtKB"/>
</dbReference>
<dbReference type="GO" id="GO:0042771">
    <property type="term" value="P:intrinsic apoptotic signaling pathway in response to DNA damage by p53 class mediator"/>
    <property type="evidence" value="ECO:0007669"/>
    <property type="project" value="Ensembl"/>
</dbReference>
<dbReference type="GO" id="GO:0044773">
    <property type="term" value="P:mitotic DNA damage checkpoint signaling"/>
    <property type="evidence" value="ECO:0000318"/>
    <property type="project" value="GO_Central"/>
</dbReference>
<dbReference type="GO" id="GO:0031573">
    <property type="term" value="P:mitotic intra-S DNA damage checkpoint signaling"/>
    <property type="evidence" value="ECO:0000315"/>
    <property type="project" value="UniProtKB"/>
</dbReference>
<dbReference type="GO" id="GO:0090307">
    <property type="term" value="P:mitotic spindle assembly"/>
    <property type="evidence" value="ECO:0000315"/>
    <property type="project" value="UniProtKB"/>
</dbReference>
<dbReference type="GO" id="GO:2000002">
    <property type="term" value="P:negative regulation of DNA damage checkpoint"/>
    <property type="evidence" value="ECO:0007669"/>
    <property type="project" value="Ensembl"/>
</dbReference>
<dbReference type="GO" id="GO:2000210">
    <property type="term" value="P:positive regulation of anoikis"/>
    <property type="evidence" value="ECO:0007669"/>
    <property type="project" value="Ensembl"/>
</dbReference>
<dbReference type="GO" id="GO:0045893">
    <property type="term" value="P:positive regulation of DNA-templated transcription"/>
    <property type="evidence" value="ECO:0000314"/>
    <property type="project" value="UniProtKB"/>
</dbReference>
<dbReference type="GO" id="GO:0046777">
    <property type="term" value="P:protein autophosphorylation"/>
    <property type="evidence" value="ECO:0000314"/>
    <property type="project" value="UniProtKB"/>
</dbReference>
<dbReference type="GO" id="GO:0030163">
    <property type="term" value="P:protein catabolic process"/>
    <property type="evidence" value="ECO:0000315"/>
    <property type="project" value="UniProtKB"/>
</dbReference>
<dbReference type="GO" id="GO:0006468">
    <property type="term" value="P:protein phosphorylation"/>
    <property type="evidence" value="ECO:0000314"/>
    <property type="project" value="UniProtKB"/>
</dbReference>
<dbReference type="GO" id="GO:0050821">
    <property type="term" value="P:protein stabilization"/>
    <property type="evidence" value="ECO:0000314"/>
    <property type="project" value="UniProtKB"/>
</dbReference>
<dbReference type="GO" id="GO:2000785">
    <property type="term" value="P:regulation of autophagosome assembly"/>
    <property type="evidence" value="ECO:0000314"/>
    <property type="project" value="UniProt"/>
</dbReference>
<dbReference type="GO" id="GO:0006355">
    <property type="term" value="P:regulation of DNA-templated transcription"/>
    <property type="evidence" value="ECO:0000314"/>
    <property type="project" value="UniProtKB"/>
</dbReference>
<dbReference type="GO" id="GO:0042176">
    <property type="term" value="P:regulation of protein catabolic process"/>
    <property type="evidence" value="ECO:0000315"/>
    <property type="project" value="UniProtKB"/>
</dbReference>
<dbReference type="GO" id="GO:1901796">
    <property type="term" value="P:regulation of signal transduction by p53 class mediator"/>
    <property type="evidence" value="ECO:0000304"/>
    <property type="project" value="Reactome"/>
</dbReference>
<dbReference type="GO" id="GO:0090399">
    <property type="term" value="P:replicative senescence"/>
    <property type="evidence" value="ECO:0000303"/>
    <property type="project" value="BHF-UCL"/>
</dbReference>
<dbReference type="GO" id="GO:1903416">
    <property type="term" value="P:response to glycoside"/>
    <property type="evidence" value="ECO:0007669"/>
    <property type="project" value="Ensembl"/>
</dbReference>
<dbReference type="GO" id="GO:0042770">
    <property type="term" value="P:signal transduction in response to DNA damage"/>
    <property type="evidence" value="ECO:0000314"/>
    <property type="project" value="MGI"/>
</dbReference>
<dbReference type="GO" id="GO:0070242">
    <property type="term" value="P:thymocyte apoptotic process"/>
    <property type="evidence" value="ECO:0007669"/>
    <property type="project" value="Ensembl"/>
</dbReference>
<dbReference type="CDD" id="cd22666">
    <property type="entry name" value="FHA_CHK2"/>
    <property type="match status" value="1"/>
</dbReference>
<dbReference type="CDD" id="cd14084">
    <property type="entry name" value="STKc_Chk2"/>
    <property type="match status" value="1"/>
</dbReference>
<dbReference type="DisProt" id="DP01797"/>
<dbReference type="FunFam" id="1.10.510.10:FF:000354">
    <property type="entry name" value="Serine/threonine-protein kinase Chk2"/>
    <property type="match status" value="1"/>
</dbReference>
<dbReference type="FunFam" id="2.60.200.20:FF:000011">
    <property type="entry name" value="Serine/threonine-protein kinase Chk2"/>
    <property type="match status" value="1"/>
</dbReference>
<dbReference type="FunFam" id="3.30.200.20:FF:000255">
    <property type="entry name" value="serine/threonine-protein kinase Chk2 isoform X1"/>
    <property type="match status" value="1"/>
</dbReference>
<dbReference type="Gene3D" id="2.60.200.20">
    <property type="match status" value="1"/>
</dbReference>
<dbReference type="Gene3D" id="3.30.200.20">
    <property type="entry name" value="Phosphorylase Kinase, domain 1"/>
    <property type="match status" value="1"/>
</dbReference>
<dbReference type="Gene3D" id="1.10.510.10">
    <property type="entry name" value="Transferase(Phosphotransferase) domain 1"/>
    <property type="match status" value="1"/>
</dbReference>
<dbReference type="InterPro" id="IPR000253">
    <property type="entry name" value="FHA_dom"/>
</dbReference>
<dbReference type="InterPro" id="IPR011009">
    <property type="entry name" value="Kinase-like_dom_sf"/>
</dbReference>
<dbReference type="InterPro" id="IPR000719">
    <property type="entry name" value="Prot_kinase_dom"/>
</dbReference>
<dbReference type="InterPro" id="IPR008271">
    <property type="entry name" value="Ser/Thr_kinase_AS"/>
</dbReference>
<dbReference type="InterPro" id="IPR008984">
    <property type="entry name" value="SMAD_FHA_dom_sf"/>
</dbReference>
<dbReference type="PANTHER" id="PTHR44167">
    <property type="entry name" value="OVARIAN-SPECIFIC SERINE/THREONINE-PROTEIN KINASE LOK-RELATED"/>
    <property type="match status" value="1"/>
</dbReference>
<dbReference type="PANTHER" id="PTHR44167:SF24">
    <property type="entry name" value="SERINE_THREONINE-PROTEIN KINASE CHK2"/>
    <property type="match status" value="1"/>
</dbReference>
<dbReference type="Pfam" id="PF00498">
    <property type="entry name" value="FHA"/>
    <property type="match status" value="1"/>
</dbReference>
<dbReference type="Pfam" id="PF00069">
    <property type="entry name" value="Pkinase"/>
    <property type="match status" value="1"/>
</dbReference>
<dbReference type="SMART" id="SM00240">
    <property type="entry name" value="FHA"/>
    <property type="match status" value="1"/>
</dbReference>
<dbReference type="SMART" id="SM00220">
    <property type="entry name" value="S_TKc"/>
    <property type="match status" value="1"/>
</dbReference>
<dbReference type="SUPFAM" id="SSF56112">
    <property type="entry name" value="Protein kinase-like (PK-like)"/>
    <property type="match status" value="1"/>
</dbReference>
<dbReference type="SUPFAM" id="SSF49879">
    <property type="entry name" value="SMAD/FHA domain"/>
    <property type="match status" value="1"/>
</dbReference>
<dbReference type="PROSITE" id="PS50006">
    <property type="entry name" value="FHA_DOMAIN"/>
    <property type="match status" value="1"/>
</dbReference>
<dbReference type="PROSITE" id="PS50011">
    <property type="entry name" value="PROTEIN_KINASE_DOM"/>
    <property type="match status" value="1"/>
</dbReference>
<dbReference type="PROSITE" id="PS00108">
    <property type="entry name" value="PROTEIN_KINASE_ST"/>
    <property type="match status" value="1"/>
</dbReference>
<name>CHK2_HUMAN</name>
<keyword id="KW-0002">3D-structure</keyword>
<keyword id="KW-0025">Alternative splicing</keyword>
<keyword id="KW-0053">Apoptosis</keyword>
<keyword id="KW-0067">ATP-binding</keyword>
<keyword id="KW-0131">Cell cycle</keyword>
<keyword id="KW-0132">Cell division</keyword>
<keyword id="KW-0225">Disease variant</keyword>
<keyword id="KW-0227">DNA damage</keyword>
<keyword id="KW-0234">DNA repair</keyword>
<keyword id="KW-0945">Host-virus interaction</keyword>
<keyword id="KW-0418">Kinase</keyword>
<keyword id="KW-0435">Li-Fraumeni syndrome</keyword>
<keyword id="KW-0460">Magnesium</keyword>
<keyword id="KW-0479">Metal-binding</keyword>
<keyword id="KW-0498">Mitosis</keyword>
<keyword id="KW-0547">Nucleotide-binding</keyword>
<keyword id="KW-0539">Nucleus</keyword>
<keyword id="KW-0597">Phosphoprotein</keyword>
<keyword id="KW-1267">Proteomics identification</keyword>
<keyword id="KW-1185">Reference proteome</keyword>
<keyword id="KW-0723">Serine/threonine-protein kinase</keyword>
<keyword id="KW-0804">Transcription</keyword>
<keyword id="KW-0805">Transcription regulation</keyword>
<keyword id="KW-0808">Transferase</keyword>
<keyword id="KW-0043">Tumor suppressor</keyword>
<keyword id="KW-0832">Ubl conjugation</keyword>
<protein>
    <recommendedName>
        <fullName evidence="61">Serine/threonine-protein kinase Chk2</fullName>
        <ecNumber evidence="52">2.7.11.1</ecNumber>
    </recommendedName>
    <alternativeName>
        <fullName>CHK2 checkpoint homolog</fullName>
    </alternativeName>
    <alternativeName>
        <fullName>Cds1 homolog</fullName>
        <shortName>Hucds1</shortName>
        <shortName>hCds1</shortName>
    </alternativeName>
    <alternativeName>
        <fullName>Checkpoint kinase 2</fullName>
    </alternativeName>
</protein>
<feature type="chain" id="PRO_0000085858" description="Serine/threonine-protein kinase Chk2">
    <location>
        <begin position="1"/>
        <end position="543"/>
    </location>
</feature>
<feature type="domain" description="FHA" evidence="2">
    <location>
        <begin position="113"/>
        <end position="175"/>
    </location>
</feature>
<feature type="domain" description="Protein kinase" evidence="3">
    <location>
        <begin position="220"/>
        <end position="486"/>
    </location>
</feature>
<feature type="region of interest" description="Disordered" evidence="4">
    <location>
        <begin position="1"/>
        <end position="66"/>
    </location>
</feature>
<feature type="region of interest" description="T-loop/activation segment">
    <location>
        <begin position="368"/>
        <end position="394"/>
    </location>
</feature>
<feature type="region of interest" description="Disordered" evidence="4">
    <location>
        <begin position="506"/>
        <end position="538"/>
    </location>
</feature>
<feature type="compositionally biased region" description="Polar residues" evidence="4">
    <location>
        <begin position="8"/>
        <end position="22"/>
    </location>
</feature>
<feature type="compositionally biased region" description="Low complexity" evidence="4">
    <location>
        <begin position="23"/>
        <end position="62"/>
    </location>
</feature>
<feature type="compositionally biased region" description="Polar residues" evidence="4">
    <location>
        <begin position="506"/>
        <end position="517"/>
    </location>
</feature>
<feature type="compositionally biased region" description="Basic and acidic residues" evidence="4">
    <location>
        <begin position="523"/>
        <end position="534"/>
    </location>
</feature>
<feature type="active site" description="Proton acceptor">
    <location>
        <position position="347"/>
    </location>
</feature>
<feature type="binding site">
    <location>
        <begin position="227"/>
        <end position="234"/>
    </location>
    <ligand>
        <name>ATP</name>
        <dbReference type="ChEBI" id="CHEBI:30616"/>
    </ligand>
</feature>
<feature type="binding site">
    <location>
        <position position="249"/>
    </location>
    <ligand>
        <name>ATP</name>
        <dbReference type="ChEBI" id="CHEBI:30616"/>
    </ligand>
</feature>
<feature type="binding site">
    <location>
        <begin position="302"/>
        <end position="308"/>
    </location>
    <ligand>
        <name>ATP</name>
        <dbReference type="ChEBI" id="CHEBI:30616"/>
    </ligand>
</feature>
<feature type="binding site">
    <location>
        <begin position="351"/>
        <end position="352"/>
    </location>
    <ligand>
        <name>ATP</name>
        <dbReference type="ChEBI" id="CHEBI:30616"/>
    </ligand>
</feature>
<feature type="binding site">
    <location>
        <position position="368"/>
    </location>
    <ligand>
        <name>ATP</name>
        <dbReference type="ChEBI" id="CHEBI:30616"/>
    </ligand>
</feature>
<feature type="modified residue" description="Phosphoserine; by PLK3" evidence="37">
    <location>
        <position position="62"/>
    </location>
</feature>
<feature type="modified residue" description="Phosphothreonine; by ATM and MAP3K20" evidence="8 29 36 37">
    <location>
        <position position="68"/>
    </location>
</feature>
<feature type="modified residue" description="Phosphoserine; by PLK3" evidence="37">
    <location>
        <position position="73"/>
    </location>
</feature>
<feature type="modified residue" description="Phosphoserine; by autocatalysis" evidence="43">
    <location>
        <position position="379"/>
    </location>
</feature>
<feature type="modified residue" description="Phosphothreonine; by autocatalysis" evidence="10">
    <location>
        <position position="383"/>
    </location>
</feature>
<feature type="modified residue" description="Phosphothreonine; by autocatalysis" evidence="10">
    <location>
        <position position="387"/>
    </location>
</feature>
<feature type="modified residue" description="Phosphoserine" evidence="41">
    <location>
        <position position="456"/>
    </location>
</feature>
<feature type="splice variant" id="VSP_045148" description="In isoform 13." evidence="59">
    <location>
        <begin position="1"/>
        <end position="221"/>
    </location>
</feature>
<feature type="splice variant" id="VSP_014556" description="In isoform 11." evidence="57">
    <location>
        <begin position="75"/>
        <end position="392"/>
    </location>
</feature>
<feature type="splice variant" id="VSP_014559" description="In isoform 3." evidence="57">
    <location>
        <begin position="107"/>
        <end position="487"/>
    </location>
</feature>
<feature type="splice variant" id="VSP_014558" description="In isoform 4." evidence="57">
    <location>
        <begin position="107"/>
        <end position="197"/>
    </location>
</feature>
<feature type="splice variant" id="VSP_014557" description="In isoform 9." evidence="57 58">
    <original>E</original>
    <variation>ETESGHVTQSDLELLLSSDPPASASQSAGIRGVRHHPRPVCSLK</variation>
    <location>
        <position position="107"/>
    </location>
</feature>
<feature type="splice variant" id="VSP_014560" description="In isoform 10." evidence="57">
    <original>KRTDKYRTYSKKHFRIF</original>
    <variation>EFRSYSFYLP</variation>
    <location>
        <begin position="131"/>
        <end position="147"/>
    </location>
</feature>
<feature type="splice variant" id="VSP_014561" description="In isoform 10." evidence="57">
    <location>
        <begin position="148"/>
        <end position="543"/>
    </location>
</feature>
<feature type="splice variant" id="VSP_014562" description="In isoform 6." evidence="57">
    <original>VGPKNSYIAYIEDHSG</original>
    <variation>ENLSCPYRIWFNFCLF</variation>
    <location>
        <begin position="150"/>
        <end position="165"/>
    </location>
</feature>
<feature type="splice variant" id="VSP_014563" description="In isoform 6." evidence="57">
    <location>
        <begin position="166"/>
        <end position="543"/>
    </location>
</feature>
<feature type="splice variant" id="VSP_014564" description="In isoform 2." evidence="56 57">
    <original>VFVFFDLTVDDQSVYPKALRDEYIMSK</original>
    <variation>EKILKIYSLSRFSKIRRGAVAHVFNPS</variation>
    <location>
        <begin position="198"/>
        <end position="224"/>
    </location>
</feature>
<feature type="splice variant" id="VSP_014565" description="In isoform 5." evidence="57">
    <original>FVFFD</original>
    <variation>VPVER</variation>
    <location>
        <begin position="199"/>
        <end position="203"/>
    </location>
</feature>
<feature type="splice variant" id="VSP_014566" description="In isoform 5." evidence="57">
    <location>
        <begin position="204"/>
        <end position="543"/>
    </location>
</feature>
<feature type="splice variant" id="VSP_014567" description="In isoform 2." evidence="56 57">
    <original>SGACGEV</original>
    <variation>GRGWQIT</variation>
    <location>
        <begin position="228"/>
        <end position="234"/>
    </location>
</feature>
<feature type="splice variant" id="VSP_014568" description="In isoform 2." evidence="56 57">
    <location>
        <begin position="235"/>
        <end position="543"/>
    </location>
</feature>
<feature type="splice variant" id="VSP_014569" description="In isoform 8." evidence="57">
    <original>PCIIKIK</original>
    <variation>DGRGRAV</variation>
    <location>
        <begin position="283"/>
        <end position="289"/>
    </location>
</feature>
<feature type="splice variant" id="VSP_014570" description="In isoform 8." evidence="57">
    <location>
        <begin position="290"/>
        <end position="543"/>
    </location>
</feature>
<feature type="splice variant" id="VSP_014571" description="In isoform 12." evidence="57 60">
    <location>
        <begin position="337"/>
        <end position="365"/>
    </location>
</feature>
<feature type="splice variant" id="VSP_014572" description="In isoform 7." evidence="57">
    <original>YLH</original>
    <variation>MKT</variation>
    <location>
        <begin position="337"/>
        <end position="339"/>
    </location>
</feature>
<feature type="splice variant" id="VSP_014573" description="In isoform 7." evidence="57">
    <location>
        <begin position="340"/>
        <end position="543"/>
    </location>
</feature>
<feature type="sequence variant" id="VAR_019101" description="Found in an osteogenic sarcoma sample; somatic mutation; might influence susceptibility to breast cancer; dbSNP:rs137853008." evidence="13">
    <original>A</original>
    <variation>S</variation>
    <location>
        <position position="17"/>
    </location>
</feature>
<feature type="sequence variant" id="VAR_026630" description="In multiple cancers; dbSNP:rs149991239." evidence="15">
    <original>T</original>
    <variation>K</variation>
    <location>
        <position position="59"/>
    </location>
</feature>
<feature type="sequence variant" id="VAR_019107" description="In prostate cancer; somatic mutation; dbSNP:rs141568342." evidence="20">
    <original>E</original>
    <variation>K</variation>
    <location>
        <position position="64"/>
    </location>
</feature>
<feature type="sequence variant" id="VAR_019102" description="Found in an osteogenic sarcoma sample; somatic mutation; dbSNP:rs17883862." evidence="13 32 55">
    <original>P</original>
    <variation>L</variation>
    <location>
        <position position="85"/>
    </location>
</feature>
<feature type="sequence variant" id="VAR_022461" description="In BC; dbSNP:rs28909982." evidence="19 22 34">
    <original>R</original>
    <variation>G</variation>
    <location>
        <position position="117"/>
    </location>
</feature>
<feature type="sequence variant" id="VAR_022462" description="Might influence susceptibility to breast cancer; dbSNP:rs368570187." evidence="19 34">
    <original>R</original>
    <variation>Q</variation>
    <location>
        <position position="137"/>
    </location>
</feature>
<feature type="sequence variant" id="VAR_019108" description="In prostate cancer; somatic mutation; dbSNP:rs587781667." evidence="20">
    <original>R</original>
    <variation>P</variation>
    <location>
        <position position="145"/>
    </location>
</feature>
<feature type="sequence variant" id="VAR_008554" description="In TPDS4; loss of the ability to interact with and phosphorylate CDC25A and to promote CDC25A degradation in response to ionizing radiation; dbSNP:rs137853007." evidence="6 9 12 22 31 34">
    <original>R</original>
    <variation>W</variation>
    <location>
        <position position="145"/>
    </location>
</feature>
<feature type="sequence variant" id="VAR_008555" description="Might influence susceptibility to different types of cancer; loss of the ability to interact with and phosphorylate CDC25A and to promote CDC25A degradation in response to ionizing radiation; dbSNP:rs17879961." evidence="6 9 11 20 22 25 26 27 28 30 31 33 34 55">
    <original>I</original>
    <variation>T</variation>
    <location>
        <position position="157"/>
    </location>
</feature>
<feature type="sequence variant" id="VAR_019109" description="In prostate cancer; somatic mutation; dbSNP:rs72552322." evidence="20">
    <original>G</original>
    <variation>R</variation>
    <location>
        <position position="167"/>
    </location>
</feature>
<feature type="sequence variant" id="VAR_019103" description="In prostate cancer; somatic mutation; dbSNP:rs77130927." evidence="20 47">
    <original>R</original>
    <variation>C</variation>
    <location>
        <position position="180"/>
    </location>
</feature>
<feature type="sequence variant" id="VAR_019110" description="In prostate cancer; somatic mutation; dbSNP:rs137853009." evidence="19 20 34">
    <original>R</original>
    <variation>H</variation>
    <location>
        <position position="180"/>
    </location>
</feature>
<feature type="sequence variant" id="VAR_019104" description="In prostate cancer; somatic mutation; dbSNP:rs137853010." evidence="20">
    <original>R</original>
    <variation>C</variation>
    <location>
        <position position="181"/>
    </location>
</feature>
<feature type="sequence variant" id="VAR_019105" description="In prostate cancer; somatic mutation; dbSNP:rs121908701." evidence="20">
    <original>R</original>
    <variation>H</variation>
    <location>
        <position position="181"/>
    </location>
</feature>
<feature type="sequence variant" id="VAR_019106" description="In prostate cancer; germline mutation; dbSNP:rs121908702." evidence="20">
    <original>E</original>
    <variation>K</variation>
    <location>
        <position position="239"/>
    </location>
</feature>
<feature type="sequence variant" id="VAR_019111" description="In prostate cancer; uncertain significance; dbSNP:rs587780189." evidence="20">
    <original>I</original>
    <variation>F</variation>
    <location>
        <position position="251"/>
    </location>
</feature>
<feature type="sequence variant" id="VAR_019112" description="In prostate cancer; uncertain significance; somatic mutation; dbSNP:rs143611747." evidence="20">
    <original>R</original>
    <variation>H</variation>
    <location>
        <position position="318"/>
    </location>
</feature>
<feature type="sequence variant" id="VAR_019113" description="In prostate cancer; somatic mutation; dbSNP:rs750984976." evidence="20">
    <original>T</original>
    <variation>P</variation>
    <location>
        <position position="323"/>
    </location>
</feature>
<feature type="sequence variant" id="VAR_019114" description="In prostate cancer; uncertain significance; somatic mutation; dbSNP:rs587780194." evidence="20">
    <original>Y</original>
    <variation>C</variation>
    <location>
        <position position="327"/>
    </location>
</feature>
<feature type="sequence variant" id="VAR_029154" description="In dbSNP:rs28909980.">
    <original>D</original>
    <variation>N</variation>
    <location>
        <position position="347"/>
    </location>
</feature>
<feature type="sequence variant" id="VAR_066012" description="Confers a moderate risk of breast cancer; partially reduces kinase activity; dbSNP:rs531398630." evidence="47">
    <original>H</original>
    <variation>Y</variation>
    <location>
        <position position="371"/>
    </location>
</feature>
<feature type="sequence variant" id="VAR_073020" description="In BC; does not phosphorylate p53/TP53; dbSNP:rs200928781." evidence="50">
    <original>Y</original>
    <variation>C</variation>
    <location>
        <position position="390"/>
    </location>
</feature>
<feature type="sequence variant" id="VAR_024572" description="In dbSNP:rs200649225.">
    <original>R</original>
    <variation>H</variation>
    <location>
        <position position="406"/>
    </location>
</feature>
<feature type="sequence variant" id="VAR_022463" description="May increase breast cancer risk; dbSNP:rs137853011." evidence="32">
    <original>S</original>
    <variation>F</variation>
    <location>
        <position position="428"/>
    </location>
</feature>
<feature type="sequence variant" id="VAR_021117" description="In dbSNP:rs17882922." evidence="55">
    <original>L</original>
    <variation>M</variation>
    <location>
        <position position="436"/>
    </location>
</feature>
<feature type="sequence variant" id="VAR_021118" description="In dbSNP:rs17880867." evidence="55">
    <original>N</original>
    <variation>K</variation>
    <location>
        <position position="446"/>
    </location>
</feature>
<feature type="sequence variant" id="VAR_021119" description="In dbSNP:rs17881473." evidence="55">
    <original>F</original>
    <variation>I</variation>
    <location>
        <position position="447"/>
    </location>
</feature>
<feature type="sequence variant" id="VAR_021120" description="In dbSNP:rs17886163." evidence="55">
    <original>I</original>
    <variation>S</variation>
    <location>
        <position position="448"/>
    </location>
</feature>
<feature type="sequence variant" id="VAR_019115" description="In prostate cancer; somatic mutation." evidence="20">
    <original>T</original>
    <variation>K</variation>
    <location>
        <position position="476"/>
    </location>
</feature>
<feature type="sequence variant" id="VAR_029155" description="In dbSNP:rs28909981.">
    <original>S</original>
    <variation>C</variation>
    <location>
        <position position="500"/>
    </location>
</feature>
<feature type="sequence variant" id="VAR_021121" description="In dbSNP:rs17883172." evidence="55">
    <original>E</original>
    <variation>K</variation>
    <location>
        <position position="501"/>
    </location>
</feature>
<feature type="sequence variant" id="VAR_021122" description="In dbSNP:rs17882942." evidence="55">
    <original>L</original>
    <variation>V</variation>
    <location>
        <position position="512"/>
    </location>
</feature>
<feature type="mutagenesis site" description="Loss of activation and phosphorylation." evidence="14 29">
    <original>T</original>
    <variation>A</variation>
    <location>
        <position position="68"/>
    </location>
</feature>
<feature type="mutagenesis site" description="Impaired activation, phosphorylation by ATM and G2/M transition checkpoint." evidence="37">
    <original>S</original>
    <variation>A</variation>
    <location>
        <position position="73"/>
    </location>
</feature>
<feature type="mutagenesis site" description="Loss of kinase activity and of the ability to phosphorylate CDC25A." evidence="9 53">
    <original>D</original>
    <variation>A</variation>
    <location>
        <position position="347"/>
    </location>
</feature>
<feature type="mutagenesis site" description="Loss of autophosphorylation activity." evidence="29">
    <original>D</original>
    <variation>N</variation>
    <location>
        <position position="368"/>
    </location>
</feature>
<feature type="mutagenesis site" description="Abrogates autophosphorylation at Ser-379 and prevents ubiquitination." evidence="43">
    <original>S</original>
    <variation>A</variation>
    <location>
        <position position="379"/>
    </location>
</feature>
<feature type="mutagenesis site" description="Loss of phosphorylation in response to ionizing radiation." evidence="10">
    <original>T</original>
    <variation>A</variation>
    <location>
        <position position="383"/>
    </location>
</feature>
<feature type="mutagenesis site" description="Loss of phosphorylation in response to ionizing radiation." evidence="10">
    <original>T</original>
    <variation>A</variation>
    <location>
        <position position="387"/>
    </location>
</feature>
<feature type="mutagenesis site" description="Increased ubiquitination and degradation by the proteasome." evidence="41">
    <original>S</original>
    <variation>A</variation>
    <location>
        <position position="456"/>
    </location>
</feature>
<feature type="strand" evidence="63">
    <location>
        <begin position="94"/>
        <end position="98"/>
    </location>
</feature>
<feature type="strand" evidence="68">
    <location>
        <begin position="100"/>
        <end position="103"/>
    </location>
</feature>
<feature type="strand" evidence="63">
    <location>
        <begin position="106"/>
        <end position="108"/>
    </location>
</feature>
<feature type="strand" evidence="63">
    <location>
        <begin position="110"/>
        <end position="118"/>
    </location>
</feature>
<feature type="strand" evidence="63">
    <location>
        <begin position="122"/>
        <end position="124"/>
    </location>
</feature>
<feature type="helix" evidence="63">
    <location>
        <begin position="128"/>
        <end position="132"/>
    </location>
</feature>
<feature type="helix" evidence="63">
    <location>
        <begin position="135"/>
        <end position="138"/>
    </location>
</feature>
<feature type="strand" evidence="63">
    <location>
        <begin position="144"/>
        <end position="150"/>
    </location>
</feature>
<feature type="strand" evidence="63">
    <location>
        <begin position="154"/>
        <end position="162"/>
    </location>
</feature>
<feature type="strand" evidence="63">
    <location>
        <begin position="168"/>
        <end position="170"/>
    </location>
</feature>
<feature type="strand" evidence="63">
    <location>
        <begin position="180"/>
        <end position="182"/>
    </location>
</feature>
<feature type="strand" evidence="63">
    <location>
        <begin position="187"/>
        <end position="193"/>
    </location>
</feature>
<feature type="strand" evidence="63">
    <location>
        <begin position="197"/>
        <end position="203"/>
    </location>
</feature>
<feature type="helix" evidence="68">
    <location>
        <begin position="209"/>
        <end position="211"/>
    </location>
</feature>
<feature type="helix" evidence="67">
    <location>
        <begin position="214"/>
        <end position="219"/>
    </location>
</feature>
<feature type="strand" evidence="67">
    <location>
        <begin position="220"/>
        <end position="228"/>
    </location>
</feature>
<feature type="strand" evidence="67">
    <location>
        <begin position="230"/>
        <end position="239"/>
    </location>
</feature>
<feature type="turn" evidence="67">
    <location>
        <begin position="240"/>
        <end position="243"/>
    </location>
</feature>
<feature type="strand" evidence="67">
    <location>
        <begin position="244"/>
        <end position="251"/>
    </location>
</feature>
<feature type="helix" evidence="68">
    <location>
        <begin position="253"/>
        <end position="256"/>
    </location>
</feature>
<feature type="helix" evidence="67">
    <location>
        <begin position="270"/>
        <end position="279"/>
    </location>
</feature>
<feature type="strand" evidence="67">
    <location>
        <begin position="288"/>
        <end position="302"/>
    </location>
</feature>
<feature type="strand" evidence="69">
    <location>
        <begin position="307"/>
        <end position="309"/>
    </location>
</feature>
<feature type="helix" evidence="67">
    <location>
        <begin position="310"/>
        <end position="313"/>
    </location>
</feature>
<feature type="helix" evidence="65">
    <location>
        <begin position="314"/>
        <end position="316"/>
    </location>
</feature>
<feature type="helix" evidence="67">
    <location>
        <begin position="321"/>
        <end position="340"/>
    </location>
</feature>
<feature type="helix" evidence="67">
    <location>
        <begin position="350"/>
        <end position="352"/>
    </location>
</feature>
<feature type="strand" evidence="67">
    <location>
        <begin position="353"/>
        <end position="361"/>
    </location>
</feature>
<feature type="strand" evidence="67">
    <location>
        <begin position="364"/>
        <end position="366"/>
    </location>
</feature>
<feature type="helix" evidence="70">
    <location>
        <begin position="369"/>
        <end position="371"/>
    </location>
</feature>
<feature type="helix" evidence="67">
    <location>
        <begin position="379"/>
        <end position="385"/>
    </location>
</feature>
<feature type="helix" evidence="66">
    <location>
        <begin position="388"/>
        <end position="390"/>
    </location>
</feature>
<feature type="helix" evidence="67">
    <location>
        <begin position="393"/>
        <end position="398"/>
    </location>
</feature>
<feature type="turn" evidence="67">
    <location>
        <begin position="399"/>
        <end position="403"/>
    </location>
</feature>
<feature type="helix" evidence="67">
    <location>
        <begin position="407"/>
        <end position="422"/>
    </location>
</feature>
<feature type="strand" evidence="64">
    <location>
        <begin position="429"/>
        <end position="431"/>
    </location>
</feature>
<feature type="helix" evidence="67">
    <location>
        <begin position="436"/>
        <end position="442"/>
    </location>
</feature>
<feature type="helix" evidence="67">
    <location>
        <begin position="449"/>
        <end position="452"/>
    </location>
</feature>
<feature type="helix" evidence="67">
    <location>
        <begin position="457"/>
        <end position="466"/>
    </location>
</feature>
<feature type="turn" evidence="67">
    <location>
        <begin position="471"/>
        <end position="473"/>
    </location>
</feature>
<feature type="helix" evidence="67">
    <location>
        <begin position="477"/>
        <end position="481"/>
    </location>
</feature>
<feature type="helix" evidence="67">
    <location>
        <begin position="484"/>
        <end position="486"/>
    </location>
</feature>
<feature type="helix" evidence="67">
    <location>
        <begin position="489"/>
        <end position="502"/>
    </location>
</feature>
<feature type="turn" evidence="66">
    <location>
        <begin position="504"/>
        <end position="506"/>
    </location>
</feature>
<evidence type="ECO:0000250" key="1">
    <source>
        <dbReference type="UniProtKB" id="Q9Z265"/>
    </source>
</evidence>
<evidence type="ECO:0000255" key="2">
    <source>
        <dbReference type="PROSITE-ProRule" id="PRU00086"/>
    </source>
</evidence>
<evidence type="ECO:0000255" key="3">
    <source>
        <dbReference type="PROSITE-ProRule" id="PRU00159"/>
    </source>
</evidence>
<evidence type="ECO:0000256" key="4">
    <source>
        <dbReference type="SAM" id="MobiDB-lite"/>
    </source>
</evidence>
<evidence type="ECO:0000269" key="5">
    <source>
    </source>
</evidence>
<evidence type="ECO:0000269" key="6">
    <source>
    </source>
</evidence>
<evidence type="ECO:0000269" key="7">
    <source>
    </source>
</evidence>
<evidence type="ECO:0000269" key="8">
    <source>
    </source>
</evidence>
<evidence type="ECO:0000269" key="9">
    <source>
    </source>
</evidence>
<evidence type="ECO:0000269" key="10">
    <source>
    </source>
</evidence>
<evidence type="ECO:0000269" key="11">
    <source>
    </source>
</evidence>
<evidence type="ECO:0000269" key="12">
    <source>
    </source>
</evidence>
<evidence type="ECO:0000269" key="13">
    <source>
    </source>
</evidence>
<evidence type="ECO:0000269" key="14">
    <source>
    </source>
</evidence>
<evidence type="ECO:0000269" key="15">
    <source>
    </source>
</evidence>
<evidence type="ECO:0000269" key="16">
    <source>
    </source>
</evidence>
<evidence type="ECO:0000269" key="17">
    <source>
    </source>
</evidence>
<evidence type="ECO:0000269" key="18">
    <source>
    </source>
</evidence>
<evidence type="ECO:0000269" key="19">
    <source>
    </source>
</evidence>
<evidence type="ECO:0000269" key="20">
    <source>
    </source>
</evidence>
<evidence type="ECO:0000269" key="21">
    <source>
    </source>
</evidence>
<evidence type="ECO:0000269" key="22">
    <source>
    </source>
</evidence>
<evidence type="ECO:0000269" key="23">
    <source>
    </source>
</evidence>
<evidence type="ECO:0000269" key="24">
    <source>
    </source>
</evidence>
<evidence type="ECO:0000269" key="25">
    <source>
    </source>
</evidence>
<evidence type="ECO:0000269" key="26">
    <source>
    </source>
</evidence>
<evidence type="ECO:0000269" key="27">
    <source>
    </source>
</evidence>
<evidence type="ECO:0000269" key="28">
    <source>
    </source>
</evidence>
<evidence type="ECO:0000269" key="29">
    <source>
    </source>
</evidence>
<evidence type="ECO:0000269" key="30">
    <source>
    </source>
</evidence>
<evidence type="ECO:0000269" key="31">
    <source>
    </source>
</evidence>
<evidence type="ECO:0000269" key="32">
    <source>
    </source>
</evidence>
<evidence type="ECO:0000269" key="33">
    <source>
    </source>
</evidence>
<evidence type="ECO:0000269" key="34">
    <source>
    </source>
</evidence>
<evidence type="ECO:0000269" key="35">
    <source>
    </source>
</evidence>
<evidence type="ECO:0000269" key="36">
    <source>
    </source>
</evidence>
<evidence type="ECO:0000269" key="37">
    <source>
    </source>
</evidence>
<evidence type="ECO:0000269" key="38">
    <source>
    </source>
</evidence>
<evidence type="ECO:0000269" key="39">
    <source>
    </source>
</evidence>
<evidence type="ECO:0000269" key="40">
    <source>
    </source>
</evidence>
<evidence type="ECO:0000269" key="41">
    <source>
    </source>
</evidence>
<evidence type="ECO:0000269" key="42">
    <source>
    </source>
</evidence>
<evidence type="ECO:0000269" key="43">
    <source>
    </source>
</evidence>
<evidence type="ECO:0000269" key="44">
    <source>
    </source>
</evidence>
<evidence type="ECO:0000269" key="45">
    <source>
    </source>
</evidence>
<evidence type="ECO:0000269" key="46">
    <source>
    </source>
</evidence>
<evidence type="ECO:0000269" key="47">
    <source>
    </source>
</evidence>
<evidence type="ECO:0000269" key="48">
    <source>
    </source>
</evidence>
<evidence type="ECO:0000269" key="49">
    <source>
    </source>
</evidence>
<evidence type="ECO:0000269" key="50">
    <source>
    </source>
</evidence>
<evidence type="ECO:0000269" key="51">
    <source>
    </source>
</evidence>
<evidence type="ECO:0000269" key="52">
    <source>
    </source>
</evidence>
<evidence type="ECO:0000269" key="53">
    <source>
    </source>
</evidence>
<evidence type="ECO:0000269" key="54">
    <source>
    </source>
</evidence>
<evidence type="ECO:0000269" key="55">
    <source ref="10"/>
</evidence>
<evidence type="ECO:0000303" key="56">
    <source>
    </source>
</evidence>
<evidence type="ECO:0000303" key="57">
    <source>
    </source>
</evidence>
<evidence type="ECO:0000303" key="58">
    <source>
    </source>
</evidence>
<evidence type="ECO:0000303" key="59">
    <source>
    </source>
</evidence>
<evidence type="ECO:0000303" key="60">
    <source ref="7"/>
</evidence>
<evidence type="ECO:0000305" key="61"/>
<evidence type="ECO:0000312" key="62">
    <source>
        <dbReference type="HGNC" id="HGNC:16627"/>
    </source>
</evidence>
<evidence type="ECO:0007829" key="63">
    <source>
        <dbReference type="PDB" id="1GXC"/>
    </source>
</evidence>
<evidence type="ECO:0007829" key="64">
    <source>
        <dbReference type="PDB" id="2CN5"/>
    </source>
</evidence>
<evidence type="ECO:0007829" key="65">
    <source>
        <dbReference type="PDB" id="2W7X"/>
    </source>
</evidence>
<evidence type="ECO:0007829" key="66">
    <source>
        <dbReference type="PDB" id="2WTJ"/>
    </source>
</evidence>
<evidence type="ECO:0007829" key="67">
    <source>
        <dbReference type="PDB" id="2YCF"/>
    </source>
</evidence>
<evidence type="ECO:0007829" key="68">
    <source>
        <dbReference type="PDB" id="3I6U"/>
    </source>
</evidence>
<evidence type="ECO:0007829" key="69">
    <source>
        <dbReference type="PDB" id="4BDD"/>
    </source>
</evidence>
<evidence type="ECO:0007829" key="70">
    <source>
        <dbReference type="PDB" id="4BDE"/>
    </source>
</evidence>
<accession>O96017</accession>
<accession>A8K3Y9</accession>
<accession>B7ZBF3</accession>
<accession>B7ZBF4</accession>
<accession>B7ZBF5</accession>
<accession>Q6QA03</accession>
<accession>Q6QA04</accession>
<accession>Q6QA05</accession>
<accession>Q6QA06</accession>
<accession>Q6QA07</accession>
<accession>Q6QA08</accession>
<accession>Q6QA10</accession>
<accession>Q6QA11</accession>
<accession>Q6QA12</accession>
<accession>Q6QA13</accession>
<accession>Q9HBS5</accession>
<accession>Q9HCQ8</accession>
<accession>Q9UGF0</accession>
<accession>Q9UGF1</accession>
<gene>
    <name evidence="62" type="primary">CHEK2</name>
    <name type="synonym">CDS1</name>
    <name type="synonym">CHK2</name>
    <name type="synonym">RAD53</name>
</gene>
<reference key="1">
    <citation type="journal article" date="1998" name="Science">
        <title>Linkage of ATM to cell cycle regulation by the Chk2 protein kinase.</title>
        <authorList>
            <person name="Matsuoka S."/>
            <person name="Huang M."/>
            <person name="Elledge S.J."/>
        </authorList>
    </citation>
    <scope>NUCLEOTIDE SEQUENCE [MRNA] (ISOFORM 1)</scope>
    <scope>FUNCTION IN PHOSPHORYLATION OF CDC25C</scope>
    <scope>MUTAGENESIS OF ASP-347</scope>
</reference>
<reference key="2">
    <citation type="journal article" date="1999" name="Curr. Biol.">
        <title>A human homologue of the checkpoint kinase Cds1 directly inhibits Cdc25 phosphatase.</title>
        <authorList>
            <person name="Blasina A."/>
            <person name="van de Weyer I."/>
            <person name="Laus M.C."/>
            <person name="Luyten W.H.M.L."/>
            <person name="Parker A.E."/>
            <person name="McGowan C.H."/>
        </authorList>
    </citation>
    <scope>NUCLEOTIDE SEQUENCE [MRNA] (ISOFORM 1)</scope>
    <scope>FUNCTION IN MITOSIS</scope>
</reference>
<reference key="3">
    <citation type="journal article" date="1999" name="Proc. Natl. Acad. Sci. U.S.A.">
        <title>A human Cds1-related kinase that functions downstream of ATM protein in the cellular response to DNA damage.</title>
        <authorList>
            <person name="Brown A.L."/>
            <person name="Lee C.-H."/>
            <person name="Schwarz J.K."/>
            <person name="Mitiku N."/>
            <person name="Piwnica-Worms H."/>
            <person name="Chung J.H."/>
        </authorList>
    </citation>
    <scope>NUCLEOTIDE SEQUENCE [MRNA] (ISOFORM 2)</scope>
    <scope>FUNCTION IN PHOSPHORYLATION OF CDC25C</scope>
</reference>
<reference key="4">
    <citation type="journal article" date="2004" name="Oncogene">
        <title>Alternative splicing and mutation status of CHEK2 in stage III breast cancer.</title>
        <authorList>
            <person name="Staalesen V."/>
            <person name="Falck J."/>
            <person name="Geisler S."/>
            <person name="Bartkova J."/>
            <person name="Boerresen-Dale A.-L."/>
            <person name="Lukas J."/>
            <person name="Lillehaug J.R."/>
            <person name="Bartek J."/>
            <person name="Lonning P.E."/>
        </authorList>
    </citation>
    <scope>NUCLEOTIDE SEQUENCE [MRNA] (ISOFORMS 2; 3; 4; 5; 6; 7; 8; 9; 10; 11 AND 12)</scope>
    <scope>SUBCELLULAR LOCATION</scope>
    <source>
        <tissue>Mammary gland</tissue>
    </source>
</reference>
<reference key="5">
    <citation type="journal article" date="2004" name="Genome Biol.">
        <title>A genome annotation-driven approach to cloning the human ORFeome.</title>
        <authorList>
            <person name="Collins J.E."/>
            <person name="Wright C.L."/>
            <person name="Edwards C.A."/>
            <person name="Davis M.P."/>
            <person name="Grinham J.A."/>
            <person name="Cole C.G."/>
            <person name="Goward M.E."/>
            <person name="Aguado B."/>
            <person name="Mallya M."/>
            <person name="Mokrab Y."/>
            <person name="Huckle E.J."/>
            <person name="Beare D.M."/>
            <person name="Dunham I."/>
        </authorList>
    </citation>
    <scope>NUCLEOTIDE SEQUENCE [LARGE SCALE MRNA] (ISOFORM 9)</scope>
</reference>
<reference key="6">
    <citation type="submission" date="1999-07" db="EMBL/GenBank/DDBJ databases">
        <title>Chk2/HuCds1 cell cycle checkpoint protein kinase from human colon carcinoma HT29 cells: regulation by autophosphorylation and DNA-dependent protein kinase and inhibition by cell cycle regulatory drugs.</title>
        <authorList>
            <person name="Shao R.-G."/>
            <person name="Zhang H."/>
            <person name="Yu Q."/>
            <person name="Pommier Y."/>
        </authorList>
    </citation>
    <scope>NUCLEOTIDE SEQUENCE [MRNA] (ISOFORM 1)</scope>
    <source>
        <tissue>Colon carcinoma</tissue>
    </source>
</reference>
<reference key="7">
    <citation type="submission" date="2000-03" db="EMBL/GenBank/DDBJ databases">
        <title>An alternative spliced Chk2.</title>
        <authorList>
            <person name="Ogawa A."/>
            <person name="Okabe-Nakamura A."/>
        </authorList>
    </citation>
    <scope>NUCLEOTIDE SEQUENCE [MRNA] (ISOFORM 12)</scope>
    <source>
        <tissue>T-cell</tissue>
    </source>
</reference>
<reference key="8">
    <citation type="journal article" date="2004" name="Nat. Genet.">
        <title>Complete sequencing and characterization of 21,243 full-length human cDNAs.</title>
        <authorList>
            <person name="Ota T."/>
            <person name="Suzuki Y."/>
            <person name="Nishikawa T."/>
            <person name="Otsuki T."/>
            <person name="Sugiyama T."/>
            <person name="Irie R."/>
            <person name="Wakamatsu A."/>
            <person name="Hayashi K."/>
            <person name="Sato H."/>
            <person name="Nagai K."/>
            <person name="Kimura K."/>
            <person name="Makita H."/>
            <person name="Sekine M."/>
            <person name="Obayashi M."/>
            <person name="Nishi T."/>
            <person name="Shibahara T."/>
            <person name="Tanaka T."/>
            <person name="Ishii S."/>
            <person name="Yamamoto J."/>
            <person name="Saito K."/>
            <person name="Kawai Y."/>
            <person name="Isono Y."/>
            <person name="Nakamura Y."/>
            <person name="Nagahari K."/>
            <person name="Murakami K."/>
            <person name="Yasuda T."/>
            <person name="Iwayanagi T."/>
            <person name="Wagatsuma M."/>
            <person name="Shiratori A."/>
            <person name="Sudo H."/>
            <person name="Hosoiri T."/>
            <person name="Kaku Y."/>
            <person name="Kodaira H."/>
            <person name="Kondo H."/>
            <person name="Sugawara M."/>
            <person name="Takahashi M."/>
            <person name="Kanda K."/>
            <person name="Yokoi T."/>
            <person name="Furuya T."/>
            <person name="Kikkawa E."/>
            <person name="Omura Y."/>
            <person name="Abe K."/>
            <person name="Kamihara K."/>
            <person name="Katsuta N."/>
            <person name="Sato K."/>
            <person name="Tanikawa M."/>
            <person name="Yamazaki M."/>
            <person name="Ninomiya K."/>
            <person name="Ishibashi T."/>
            <person name="Yamashita H."/>
            <person name="Murakawa K."/>
            <person name="Fujimori K."/>
            <person name="Tanai H."/>
            <person name="Kimata M."/>
            <person name="Watanabe M."/>
            <person name="Hiraoka S."/>
            <person name="Chiba Y."/>
            <person name="Ishida S."/>
            <person name="Ono Y."/>
            <person name="Takiguchi S."/>
            <person name="Watanabe S."/>
            <person name="Yosida M."/>
            <person name="Hotuta T."/>
            <person name="Kusano J."/>
            <person name="Kanehori K."/>
            <person name="Takahashi-Fujii A."/>
            <person name="Hara H."/>
            <person name="Tanase T.-O."/>
            <person name="Nomura Y."/>
            <person name="Togiya S."/>
            <person name="Komai F."/>
            <person name="Hara R."/>
            <person name="Takeuchi K."/>
            <person name="Arita M."/>
            <person name="Imose N."/>
            <person name="Musashino K."/>
            <person name="Yuuki H."/>
            <person name="Oshima A."/>
            <person name="Sasaki N."/>
            <person name="Aotsuka S."/>
            <person name="Yoshikawa Y."/>
            <person name="Matsunawa H."/>
            <person name="Ichihara T."/>
            <person name="Shiohata N."/>
            <person name="Sano S."/>
            <person name="Moriya S."/>
            <person name="Momiyama H."/>
            <person name="Satoh N."/>
            <person name="Takami S."/>
            <person name="Terashima Y."/>
            <person name="Suzuki O."/>
            <person name="Nakagawa S."/>
            <person name="Senoh A."/>
            <person name="Mizoguchi H."/>
            <person name="Goto Y."/>
            <person name="Shimizu F."/>
            <person name="Wakebe H."/>
            <person name="Hishigaki H."/>
            <person name="Watanabe T."/>
            <person name="Sugiyama A."/>
            <person name="Takemoto M."/>
            <person name="Kawakami B."/>
            <person name="Yamazaki M."/>
            <person name="Watanabe K."/>
            <person name="Kumagai A."/>
            <person name="Itakura S."/>
            <person name="Fukuzumi Y."/>
            <person name="Fujimori Y."/>
            <person name="Komiyama M."/>
            <person name="Tashiro H."/>
            <person name="Tanigami A."/>
            <person name="Fujiwara T."/>
            <person name="Ono T."/>
            <person name="Yamada K."/>
            <person name="Fujii Y."/>
            <person name="Ozaki K."/>
            <person name="Hirao M."/>
            <person name="Ohmori Y."/>
            <person name="Kawabata A."/>
            <person name="Hikiji T."/>
            <person name="Kobatake N."/>
            <person name="Inagaki H."/>
            <person name="Ikema Y."/>
            <person name="Okamoto S."/>
            <person name="Okitani R."/>
            <person name="Kawakami T."/>
            <person name="Noguchi S."/>
            <person name="Itoh T."/>
            <person name="Shigeta K."/>
            <person name="Senba T."/>
            <person name="Matsumura K."/>
            <person name="Nakajima Y."/>
            <person name="Mizuno T."/>
            <person name="Morinaga M."/>
            <person name="Sasaki M."/>
            <person name="Togashi T."/>
            <person name="Oyama M."/>
            <person name="Hata H."/>
            <person name="Watanabe M."/>
            <person name="Komatsu T."/>
            <person name="Mizushima-Sugano J."/>
            <person name="Satoh T."/>
            <person name="Shirai Y."/>
            <person name="Takahashi Y."/>
            <person name="Nakagawa K."/>
            <person name="Okumura K."/>
            <person name="Nagase T."/>
            <person name="Nomura N."/>
            <person name="Kikuchi H."/>
            <person name="Masuho Y."/>
            <person name="Yamashita R."/>
            <person name="Nakai K."/>
            <person name="Yada T."/>
            <person name="Nakamura Y."/>
            <person name="Ohara O."/>
            <person name="Isogai T."/>
            <person name="Sugano S."/>
        </authorList>
    </citation>
    <scope>NUCLEOTIDE SEQUENCE [LARGE SCALE MRNA] (ISOFORM 1)</scope>
</reference>
<reference key="9">
    <citation type="journal article" date="2004" name="Proc. Natl. Acad. Sci. U.S.A.">
        <title>Large-scale cDNA transfection screening for genes related to cancer development and progression.</title>
        <authorList>
            <person name="Wan D."/>
            <person name="Gong Y."/>
            <person name="Qin W."/>
            <person name="Zhang P."/>
            <person name="Li J."/>
            <person name="Wei L."/>
            <person name="Zhou X."/>
            <person name="Li H."/>
            <person name="Qiu X."/>
            <person name="Zhong F."/>
            <person name="He L."/>
            <person name="Yu J."/>
            <person name="Yao G."/>
            <person name="Jiang H."/>
            <person name="Qian L."/>
            <person name="Yu Y."/>
            <person name="Shu H."/>
            <person name="Chen X."/>
            <person name="Xu H."/>
            <person name="Guo M."/>
            <person name="Pan Z."/>
            <person name="Chen Y."/>
            <person name="Ge C."/>
            <person name="Yang S."/>
            <person name="Gu J."/>
        </authorList>
    </citation>
    <scope>NUCLEOTIDE SEQUENCE [LARGE SCALE MRNA] (ISOFORM 13)</scope>
</reference>
<reference key="10">
    <citation type="submission" date="2004-10" db="EMBL/GenBank/DDBJ databases">
        <authorList>
            <consortium name="NIEHS SNPs program"/>
        </authorList>
    </citation>
    <scope>NUCLEOTIDE SEQUENCE [GENOMIC DNA]</scope>
    <scope>VARIANTS LEU-85; THR-157; MET-436; LYS-446; ILE-447; SER-448; LYS-501 AND VAL-512</scope>
</reference>
<reference key="11">
    <citation type="journal article" date="1999" name="Nature">
        <title>The DNA sequence of human chromosome 22.</title>
        <authorList>
            <person name="Dunham I."/>
            <person name="Hunt A.R."/>
            <person name="Collins J.E."/>
            <person name="Bruskiewich R."/>
            <person name="Beare D.M."/>
            <person name="Clamp M."/>
            <person name="Smink L.J."/>
            <person name="Ainscough R."/>
            <person name="Almeida J.P."/>
            <person name="Babbage A.K."/>
            <person name="Bagguley C."/>
            <person name="Bailey J."/>
            <person name="Barlow K.F."/>
            <person name="Bates K.N."/>
            <person name="Beasley O.P."/>
            <person name="Bird C.P."/>
            <person name="Blakey S.E."/>
            <person name="Bridgeman A.M."/>
            <person name="Buck D."/>
            <person name="Burgess J."/>
            <person name="Burrill W.D."/>
            <person name="Burton J."/>
            <person name="Carder C."/>
            <person name="Carter N.P."/>
            <person name="Chen Y."/>
            <person name="Clark G."/>
            <person name="Clegg S.M."/>
            <person name="Cobley V.E."/>
            <person name="Cole C.G."/>
            <person name="Collier R.E."/>
            <person name="Connor R."/>
            <person name="Conroy D."/>
            <person name="Corby N.R."/>
            <person name="Coville G.J."/>
            <person name="Cox A.V."/>
            <person name="Davis J."/>
            <person name="Dawson E."/>
            <person name="Dhami P.D."/>
            <person name="Dockree C."/>
            <person name="Dodsworth S.J."/>
            <person name="Durbin R.M."/>
            <person name="Ellington A.G."/>
            <person name="Evans K.L."/>
            <person name="Fey J.M."/>
            <person name="Fleming K."/>
            <person name="French L."/>
            <person name="Garner A.A."/>
            <person name="Gilbert J.G.R."/>
            <person name="Goward M.E."/>
            <person name="Grafham D.V."/>
            <person name="Griffiths M.N.D."/>
            <person name="Hall C."/>
            <person name="Hall R.E."/>
            <person name="Hall-Tamlyn G."/>
            <person name="Heathcott R.W."/>
            <person name="Ho S."/>
            <person name="Holmes S."/>
            <person name="Hunt S.E."/>
            <person name="Jones M.C."/>
            <person name="Kershaw J."/>
            <person name="Kimberley A.M."/>
            <person name="King A."/>
            <person name="Laird G.K."/>
            <person name="Langford C.F."/>
            <person name="Leversha M.A."/>
            <person name="Lloyd C."/>
            <person name="Lloyd D.M."/>
            <person name="Martyn I.D."/>
            <person name="Mashreghi-Mohammadi M."/>
            <person name="Matthews L.H."/>
            <person name="Mccann O.T."/>
            <person name="Mcclay J."/>
            <person name="Mclaren S."/>
            <person name="McMurray A.A."/>
            <person name="Milne S.A."/>
            <person name="Mortimore B.J."/>
            <person name="Odell C.N."/>
            <person name="Pavitt R."/>
            <person name="Pearce A.V."/>
            <person name="Pearson D."/>
            <person name="Phillimore B.J.C.T."/>
            <person name="Phillips S.H."/>
            <person name="Plumb R.W."/>
            <person name="Ramsay H."/>
            <person name="Ramsey Y."/>
            <person name="Rogers L."/>
            <person name="Ross M.T."/>
            <person name="Scott C.E."/>
            <person name="Sehra H.K."/>
            <person name="Skuce C.D."/>
            <person name="Smalley S."/>
            <person name="Smith M.L."/>
            <person name="Soderlund C."/>
            <person name="Spragon L."/>
            <person name="Steward C.A."/>
            <person name="Sulston J.E."/>
            <person name="Swann R.M."/>
            <person name="Vaudin M."/>
            <person name="Wall M."/>
            <person name="Wallis J.M."/>
            <person name="Whiteley M.N."/>
            <person name="Willey D.L."/>
            <person name="Williams L."/>
            <person name="Williams S.A."/>
            <person name="Williamson H."/>
            <person name="Wilmer T.E."/>
            <person name="Wilming L."/>
            <person name="Wright C.L."/>
            <person name="Hubbard T."/>
            <person name="Bentley D.R."/>
            <person name="Beck S."/>
            <person name="Rogers J."/>
            <person name="Shimizu N."/>
            <person name="Minoshima S."/>
            <person name="Kawasaki K."/>
            <person name="Sasaki T."/>
            <person name="Asakawa S."/>
            <person name="Kudoh J."/>
            <person name="Shintani A."/>
            <person name="Shibuya K."/>
            <person name="Yoshizaki Y."/>
            <person name="Aoki N."/>
            <person name="Mitsuyama S."/>
            <person name="Roe B.A."/>
            <person name="Chen F."/>
            <person name="Chu L."/>
            <person name="Crabtree J."/>
            <person name="Deschamps S."/>
            <person name="Do A."/>
            <person name="Do T."/>
            <person name="Dorman A."/>
            <person name="Fang F."/>
            <person name="Fu Y."/>
            <person name="Hu P."/>
            <person name="Hua A."/>
            <person name="Kenton S."/>
            <person name="Lai H."/>
            <person name="Lao H.I."/>
            <person name="Lewis J."/>
            <person name="Lewis S."/>
            <person name="Lin S.-P."/>
            <person name="Loh P."/>
            <person name="Malaj E."/>
            <person name="Nguyen T."/>
            <person name="Pan H."/>
            <person name="Phan S."/>
            <person name="Qi S."/>
            <person name="Qian Y."/>
            <person name="Ray L."/>
            <person name="Ren Q."/>
            <person name="Shaull S."/>
            <person name="Sloan D."/>
            <person name="Song L."/>
            <person name="Wang Q."/>
            <person name="Wang Y."/>
            <person name="Wang Z."/>
            <person name="White J."/>
            <person name="Willingham D."/>
            <person name="Wu H."/>
            <person name="Yao Z."/>
            <person name="Zhan M."/>
            <person name="Zhang G."/>
            <person name="Chissoe S."/>
            <person name="Murray J."/>
            <person name="Miller N."/>
            <person name="Minx P."/>
            <person name="Fulton R."/>
            <person name="Johnson D."/>
            <person name="Bemis G."/>
            <person name="Bentley D."/>
            <person name="Bradshaw H."/>
            <person name="Bourne S."/>
            <person name="Cordes M."/>
            <person name="Du Z."/>
            <person name="Fulton L."/>
            <person name="Goela D."/>
            <person name="Graves T."/>
            <person name="Hawkins J."/>
            <person name="Hinds K."/>
            <person name="Kemp K."/>
            <person name="Latreille P."/>
            <person name="Layman D."/>
            <person name="Ozersky P."/>
            <person name="Rohlfing T."/>
            <person name="Scheet P."/>
            <person name="Walker C."/>
            <person name="Wamsley A."/>
            <person name="Wohldmann P."/>
            <person name="Pepin K."/>
            <person name="Nelson J."/>
            <person name="Korf I."/>
            <person name="Bedell J.A."/>
            <person name="Hillier L.W."/>
            <person name="Mardis E."/>
            <person name="Waterston R."/>
            <person name="Wilson R."/>
            <person name="Emanuel B.S."/>
            <person name="Shaikh T."/>
            <person name="Kurahashi H."/>
            <person name="Saitta S."/>
            <person name="Budarf M.L."/>
            <person name="McDermid H.E."/>
            <person name="Johnson A."/>
            <person name="Wong A.C.C."/>
            <person name="Morrow B.E."/>
            <person name="Edelmann L."/>
            <person name="Kim U.J."/>
            <person name="Shizuya H."/>
            <person name="Simon M.I."/>
            <person name="Dumanski J.P."/>
            <person name="Peyrard M."/>
            <person name="Kedra D."/>
            <person name="Seroussi E."/>
            <person name="Fransson I."/>
            <person name="Tapia I."/>
            <person name="Bruder C.E."/>
            <person name="O'Brien K.P."/>
            <person name="Wilkinson P."/>
            <person name="Bodenteich A."/>
            <person name="Hartman K."/>
            <person name="Hu X."/>
            <person name="Khan A.S."/>
            <person name="Lane L."/>
            <person name="Tilahun Y."/>
            <person name="Wright H."/>
        </authorList>
    </citation>
    <scope>NUCLEOTIDE SEQUENCE [LARGE SCALE GENOMIC DNA]</scope>
</reference>
<reference key="12">
    <citation type="submission" date="2005-07" db="EMBL/GenBank/DDBJ databases">
        <authorList>
            <person name="Mural R.J."/>
            <person name="Istrail S."/>
            <person name="Sutton G.G."/>
            <person name="Florea L."/>
            <person name="Halpern A.L."/>
            <person name="Mobarry C.M."/>
            <person name="Lippert R."/>
            <person name="Walenz B."/>
            <person name="Shatkay H."/>
            <person name="Dew I."/>
            <person name="Miller J.R."/>
            <person name="Flanigan M.J."/>
            <person name="Edwards N.J."/>
            <person name="Bolanos R."/>
            <person name="Fasulo D."/>
            <person name="Halldorsson B.V."/>
            <person name="Hannenhalli S."/>
            <person name="Turner R."/>
            <person name="Yooseph S."/>
            <person name="Lu F."/>
            <person name="Nusskern D.R."/>
            <person name="Shue B.C."/>
            <person name="Zheng X.H."/>
            <person name="Zhong F."/>
            <person name="Delcher A.L."/>
            <person name="Huson D.H."/>
            <person name="Kravitz S.A."/>
            <person name="Mouchard L."/>
            <person name="Reinert K."/>
            <person name="Remington K.A."/>
            <person name="Clark A.G."/>
            <person name="Waterman M.S."/>
            <person name="Eichler E.E."/>
            <person name="Adams M.D."/>
            <person name="Hunkapiller M.W."/>
            <person name="Myers E.W."/>
            <person name="Venter J.C."/>
        </authorList>
    </citation>
    <scope>NUCLEOTIDE SEQUENCE [LARGE SCALE GENOMIC DNA]</scope>
</reference>
<reference key="13">
    <citation type="journal article" date="2004" name="Genome Res.">
        <title>The status, quality, and expansion of the NIH full-length cDNA project: the Mammalian Gene Collection (MGC).</title>
        <authorList>
            <consortium name="The MGC Project Team"/>
        </authorList>
    </citation>
    <scope>NUCLEOTIDE SEQUENCE [LARGE SCALE MRNA] (ISOFORM 1)</scope>
    <source>
        <tissue>Muscle</tissue>
    </source>
</reference>
<reference key="14">
    <citation type="journal article" date="2000" name="Nature">
        <title>hCds1-mediated phosphorylation of BRCA1 regulates the DNA damage response.</title>
        <authorList>
            <person name="Lee J.S."/>
            <person name="Collins K.M."/>
            <person name="Brown A.L."/>
            <person name="Lee C.H."/>
            <person name="Chung J.H."/>
        </authorList>
    </citation>
    <scope>FUNCTION IN PHOSPHORYLATION OF BRCA1</scope>
    <scope>INTERACTION WITH BRCA1</scope>
</reference>
<reference key="15">
    <citation type="journal article" date="2000" name="Proc. Natl. Acad. Sci. U.S.A.">
        <title>Ataxia telangiectasia-mutated phosphorylates Chk2 in vivo and in vitro.</title>
        <authorList>
            <person name="Matsuoka S."/>
            <person name="Rotman G."/>
            <person name="Ogawa A."/>
            <person name="Shiloh Y."/>
            <person name="Tamai K."/>
            <person name="Elledge S.J."/>
        </authorList>
    </citation>
    <scope>PHOSPHORYLATION AT THR-68 BY ATM</scope>
</reference>
<reference key="16">
    <citation type="journal article" date="2001" name="J. Biol. Chem.">
        <title>The hCds1 (Chk2)-FHA domain is essential for a chain of phosphorylation events on hCds1 that is induced by ionizing radiation.</title>
        <authorList>
            <person name="Lee C.H."/>
            <person name="Chung J.H."/>
        </authorList>
    </citation>
    <scope>PHOSPHORYLATION AT THR-383 AND THR-387</scope>
    <scope>MUTAGENESIS OF THR-383 AND THR-387</scope>
</reference>
<reference key="17">
    <citation type="journal article" date="2001" name="Nature">
        <title>The ATM-Chk2-Cdc25A checkpoint pathway guards against radioresistant DNA synthesis.</title>
        <authorList>
            <person name="Falck J."/>
            <person name="Mailand N."/>
            <person name="Syljuaasen R.G."/>
            <person name="Bartek J."/>
            <person name="Lukas J."/>
        </authorList>
    </citation>
    <scope>FUNCTION IN INTRA S-PHASE CHECKPOINT</scope>
    <scope>FUNCTION IN PHOSPHORYLATION OF CDC25A</scope>
    <scope>INTERACTION WITH CDC25A</scope>
    <scope>MUTAGENESIS OF ASP-347</scope>
    <scope>CHARACTERIZATION OF VARIANT COLON CANCER TRP-145</scope>
    <scope>CHARACTERIZATION OF VARIANT THR-157</scope>
</reference>
<reference key="18">
    <citation type="journal article" date="2002" name="Am. J. Hum. Genet.">
        <title>A CHEK2 genetic variant contributing to a substantial fraction of familial breast cancer.</title>
        <authorList>
            <person name="Vahteristo P."/>
            <person name="Bartkova J."/>
            <person name="Eerola H."/>
            <person name="Syrjakoski K."/>
            <person name="Ojala S."/>
            <person name="Kilpivaara O."/>
            <person name="Tamminen A."/>
            <person name="Kononen J."/>
            <person name="Aittomaki K."/>
            <person name="Heikkila P."/>
            <person name="Holli K."/>
            <person name="Blomqvist C."/>
            <person name="Bartek J."/>
            <person name="Kallioniemi O.P."/>
            <person name="Nevanlinna H."/>
        </authorList>
    </citation>
    <scope>INVOLVEMENT IN SUSCEPTIBILITY TO BC</scope>
</reference>
<reference key="19">
    <citation type="journal article" date="2002" name="J. Biol. Chem.">
        <title>Phosphorylation of threonine 68 promotes oligomerization and autophosphorylation of the Chk2 protein kinase via the forkhead-associated domain.</title>
        <authorList>
            <person name="Ahn J.Y."/>
            <person name="Li X."/>
            <person name="Davis H.L."/>
            <person name="Canman C.E."/>
        </authorList>
    </citation>
    <scope>HOMODIMERIZATION</scope>
    <scope>AUTOPHOSPHORYLATION</scope>
    <scope>MUTAGENESIS OF THR-68</scope>
</reference>
<reference key="20">
    <citation type="journal article" date="2002" name="Nat. Cell Biol.">
        <title>PML-dependent apoptosis after DNA damage is regulated by the checkpoint kinase hCds1/Chk2.</title>
        <authorList>
            <person name="Yang S."/>
            <person name="Kuo C."/>
            <person name="Bisi J.E."/>
            <person name="Kim M.K."/>
        </authorList>
    </citation>
    <scope>FUNCTION IN APOPTOSIS</scope>
    <scope>FUNCTION IN PHOSPHORYLATION OF PML</scope>
    <scope>SUBCELLULAR LOCATION</scope>
</reference>
<reference key="21">
    <citation type="journal article" date="2002" name="Science">
        <title>53BP1, a mediator of the DNA damage checkpoint.</title>
        <authorList>
            <person name="Wang B."/>
            <person name="Matsuoka S."/>
            <person name="Carpenter P.B."/>
            <person name="Elledge S.J."/>
        </authorList>
    </citation>
    <scope>INTERACTION WITH TP53BP1</scope>
</reference>
<reference key="22">
    <citation type="journal article" date="2003" name="J. Biol. Chem.">
        <title>The promyelocytic leukemia protein protects p53 from Mdm2-mediated inhibition and degradation.</title>
        <authorList>
            <person name="Louria-Hayon I."/>
            <person name="Grossman T."/>
            <person name="Sionov R.V."/>
            <person name="Alsheich O."/>
            <person name="Pandolfi P.P."/>
            <person name="Haupt Y."/>
        </authorList>
    </citation>
    <scope>FUNCTION</scope>
    <scope>INTERACTION WITH PML AND TP53</scope>
    <scope>SUBCELLULAR LOCATION</scope>
</reference>
<reference key="23">
    <citation type="journal article" date="2003" name="Nat. Cell Biol.">
        <title>Chk2 activates E2F-1 in response to DNA damage.</title>
        <authorList>
            <person name="Stevens C."/>
            <person name="Smith L."/>
            <person name="La Thangue N.B."/>
        </authorList>
    </citation>
    <scope>FUNCTION IN TRANSCRIPTION REGULATION</scope>
    <scope>FUNCTION IN APOPTOSIS</scope>
    <scope>FUNCTION IN PHOSPHORYLATION OF E2F1</scope>
</reference>
<reference key="24">
    <citation type="journal article" date="2003" name="Nature">
        <title>MDC1 is coupled to activated CHK2 in mammalian DNA damage response pathways.</title>
        <authorList>
            <person name="Lou Z."/>
            <person name="Minter-Dykhouse K."/>
            <person name="Wu X."/>
            <person name="Chen J."/>
        </authorList>
    </citation>
    <scope>FUNCTION IN DNA DAMAGE RESPONSE</scope>
    <scope>INTERACTION WITH MDC1</scope>
</reference>
<reference key="25">
    <citation type="journal article" date="2004" name="DNA Repair">
        <title>The Chk2 protein kinase.</title>
        <authorList>
            <person name="Ahn J."/>
            <person name="Urist M."/>
            <person name="Prives C."/>
        </authorList>
    </citation>
    <scope>REVIEW ON PHOSPHORYLATION OF TP53 AND OTHER SUBSTRATES</scope>
</reference>
<reference key="26">
    <citation type="journal article" date="2004" name="J. Biol. Chem.">
        <title>The stress kinase MRK contributes to regulation of DNA damage checkpoints through a p38gamma-independent pathway.</title>
        <authorList>
            <person name="Tosti E."/>
            <person name="Waldbaum L."/>
            <person name="Warshaw G."/>
            <person name="Gross E.A."/>
            <person name="Ruggieri R."/>
        </authorList>
    </citation>
    <scope>ACTIVITY REGULATION</scope>
    <scope>PHOSPHORYLATION AT THR-68 BY MAP3K20</scope>
    <scope>MUTAGENESIS OF THR-68 AND ASP-368</scope>
</reference>
<reference key="27">
    <citation type="journal article" date="2005" name="EMBO J.">
        <title>ATM and Chk2-dependent phosphorylation of MDMX contribute to p53 activation after DNA damage.</title>
        <authorList>
            <person name="Chen L."/>
            <person name="Gilkes D.M."/>
            <person name="Pan Y."/>
            <person name="Lane W.S."/>
            <person name="Chen J."/>
        </authorList>
    </citation>
    <scope>FUNCTION IN TP53 ACTIVATION</scope>
    <scope>FUNCTION IN PHOSPHORYLATION OF MDM4</scope>
</reference>
<reference key="28">
    <citation type="journal article" date="2006" name="Cell Death Differ.">
        <title>Regulation of the antioncogenic Chk2 kinase by the oncogenic Wip1 phosphatase.</title>
        <authorList>
            <person name="Fujimoto H."/>
            <person name="Onishi N."/>
            <person name="Kato N."/>
            <person name="Takekawa M."/>
            <person name="Xu X.Z."/>
            <person name="Kosugi A."/>
            <person name="Kondo T."/>
            <person name="Imamura M."/>
            <person name="Oishi I."/>
            <person name="Yoda A."/>
            <person name="Minami Y."/>
        </authorList>
    </citation>
    <scope>PHOSPHORYLATION AT THR-68</scope>
    <scope>DEPHOSPHORYLATION AT THR-68 BY PPM1D</scope>
</reference>
<reference key="29">
    <citation type="journal article" date="2006" name="Mutat. Res.">
        <title>Priming phosphorylation of Chk2 by polo-like kinase 3 (Plk3) mediates its full activation by ATM and a downstream checkpoint in response to DNA damage.</title>
        <authorList>
            <person name="Bahassi el M."/>
            <person name="Myer D.L."/>
            <person name="McKenney R.J."/>
            <person name="Hennigan R.F."/>
            <person name="Stambrook P.J."/>
        </authorList>
    </citation>
    <scope>PHOSPHORYLATION AT SER-62; THR-68 AND SER-73</scope>
    <scope>MUTAGENESIS OF SER-73</scope>
</reference>
<reference key="30">
    <citation type="journal article" date="2007" name="EMBO J.">
        <title>Phosphorylation of pRB at Ser612 by Chk1/2 leads to a complex between pRB and E2F-1 after DNA damage.</title>
        <authorList>
            <person name="Inoue Y."/>
            <person name="Kitagawa M."/>
            <person name="Taya Y."/>
        </authorList>
    </citation>
    <scope>FUNCTION IN PHOSPHORYLATION OF RB1</scope>
</reference>
<reference key="31">
    <citation type="journal article" date="2007" name="J. Biol. Chem.">
        <title>Stability of checkpoint kinase 2 is regulated via phosphorylation at serine 456.</title>
        <authorList>
            <person name="Kass E.M."/>
            <person name="Ahn J."/>
            <person name="Tanaka T."/>
            <person name="Freed-Pastor W.A."/>
            <person name="Keezer S."/>
            <person name="Prives C."/>
        </authorList>
    </citation>
    <scope>FUNCTION IN APOPTOSIS</scope>
    <scope>PHOSPHORYLATION AT SER-456</scope>
    <scope>UBIQUITINATION</scope>
    <scope>MUTAGENESIS OF SER-456</scope>
</reference>
<reference key="32">
    <citation type="journal article" date="2007" name="Mol. Cell. Biol.">
        <title>Chk2 mediates stabilization of the FoxM1 transcription factor to stimulate expression of DNA repair genes.</title>
        <authorList>
            <person name="Tan Y."/>
            <person name="Raychaudhuri P."/>
            <person name="Costa R.H."/>
        </authorList>
    </citation>
    <scope>FUNCTION IN DNA REPAIR</scope>
    <scope>FUNCTION IN PHOSPHORYLATION OF FOXM1</scope>
</reference>
<reference key="33">
    <citation type="journal article" date="2008" name="Cell Cycle">
        <title>Nek6 is involved in G2/M phase cell cycle arrest through DNA damage-induced phosphorylation.</title>
        <authorList>
            <person name="Lee M.Y."/>
            <person name="Kim H.J."/>
            <person name="Kim M.A."/>
            <person name="Jee H.J."/>
            <person name="Kim A.J."/>
            <person name="Bae Y.S."/>
            <person name="Park J.I."/>
            <person name="Chung J.H."/>
            <person name="Yun J."/>
        </authorList>
    </citation>
    <scope>FUNCTION IN PHOSPHORYLATION OF NEK6</scope>
</reference>
<reference key="34">
    <citation type="journal article" date="2008" name="Mol. Cell. Biol.">
        <title>Regulation of Chk2 ubiquitination and signaling through autophosphorylation of serine 379.</title>
        <authorList>
            <person name="Lovly C.M."/>
            <person name="Yan L."/>
            <person name="Ryan C.E."/>
            <person name="Takada S."/>
            <person name="Piwnica-Worms H."/>
        </authorList>
    </citation>
    <scope>FUNCTION IN APOPTOSIS</scope>
    <scope>PHOSPHORYLATION AT SER-379</scope>
    <scope>MUTAGENESIS OF SER-379</scope>
    <scope>UBIQUITINATION</scope>
    <scope>INTERACTION WITH CUL1</scope>
</reference>
<reference key="35">
    <citation type="journal article" date="2008" name="Oncogene">
        <title>The checkpoint kinases Chk1 and Chk2 regulate the functional associations between hBRCA2 and Rad51 in response to DNA damage.</title>
        <authorList>
            <person name="Bahassi E.M."/>
            <person name="Ovesen J.L."/>
            <person name="Riesenberg A.L."/>
            <person name="Bernstein W.Z."/>
            <person name="Hasty P.E."/>
            <person name="Stambrook P.J."/>
        </authorList>
    </citation>
    <scope>FUNCTION IN RAD51-MEDIATED DNA REPAIR</scope>
    <scope>FUNCTION IN PHOSPHORYLATION OF BRCA2</scope>
</reference>
<reference key="36">
    <citation type="journal article" date="2009" name="Cell Cycle">
        <title>Polo-like kinase 4 phosphorylates Chk2.</title>
        <authorList>
            <person name="Petrinac S."/>
            <person name="Ganuelas M.L."/>
            <person name="Bonni S."/>
            <person name="Nantais J."/>
            <person name="Hudson J.W."/>
        </authorList>
    </citation>
    <scope>PHOSPHORYLATION BY PLK4</scope>
</reference>
<reference key="37">
    <citation type="journal article" date="2010" name="Nat. Cell Biol.">
        <title>The CHK2-BRCA1 tumour suppressor pathway ensures chromosomal stability in human somatic cells.</title>
        <authorList>
            <person name="Stolz A."/>
            <person name="Ertych N."/>
            <person name="Kienitz A."/>
            <person name="Vogel C."/>
            <person name="Schneider V."/>
            <person name="Fritz B."/>
            <person name="Jacob R."/>
            <person name="Dittmar G."/>
            <person name="Weichert W."/>
            <person name="Petersen I."/>
            <person name="Bastians H."/>
        </authorList>
    </citation>
    <scope>FUNCTION IN PHOSPHORYLATION OF BRCA1</scope>
    <scope>FUNCTION IN CHROMOSOMAL STABILITY</scope>
</reference>
<reference key="38">
    <citation type="journal article" date="2011" name="BMC Syst. Biol.">
        <title>Initial characterization of the human central proteome.</title>
        <authorList>
            <person name="Burkard T.R."/>
            <person name="Planyavsky M."/>
            <person name="Kaupe I."/>
            <person name="Breitwieser F.P."/>
            <person name="Buerckstuemmer T."/>
            <person name="Bennett K.L."/>
            <person name="Superti-Furga G."/>
            <person name="Colinge J."/>
        </authorList>
    </citation>
    <scope>IDENTIFICATION BY MASS SPECTROMETRY [LARGE SCALE ANALYSIS]</scope>
</reference>
<reference key="39">
    <citation type="journal article" date="2011" name="Hum. Mutat.">
        <title>A recurrent CHEK2 p.H371Y mutation is associated with breast cancer risk in Chinese women.</title>
        <authorList>
            <person name="Liu Y."/>
            <person name="Liao J."/>
            <person name="Xu Y."/>
            <person name="Chen W."/>
            <person name="Liu D."/>
            <person name="Ouyang T."/>
            <person name="Li J."/>
            <person name="Wang T."/>
            <person name="Fan Z."/>
            <person name="Fan T."/>
            <person name="Lin B."/>
            <person name="Xu X."/>
            <person name="Xie Y."/>
        </authorList>
    </citation>
    <scope>INVOLVEMENT IN SUSCEPTIBILITY TO BC</scope>
    <scope>VARIANTS CYS-180 AND TYR-371</scope>
    <scope>CHARACTERIZATION OF VARIANT TYR-371</scope>
</reference>
<reference key="40">
    <citation type="journal article" date="2012" name="Nat. Struct. Mol. Biol.">
        <title>The E3 ligase RNF8 regulates KU80 removal and NHEJ repair.</title>
        <authorList>
            <person name="Feng L."/>
            <person name="Chen J."/>
        </authorList>
    </citation>
    <scope>UBIQUITINATION BY RNF8</scope>
</reference>
<reference key="41">
    <citation type="journal article" date="2014" name="Nucleic Acids Res.">
        <title>Chk2 and REGgamma-dependent DBC1 regulation in DNA damage induced apoptosis.</title>
        <authorList>
            <person name="Magni M."/>
            <person name="Ruscica V."/>
            <person name="Buscemi G."/>
            <person name="Kim J.E."/>
            <person name="Nachimuthu B.T."/>
            <person name="Fontanella E."/>
            <person name="Delia D."/>
            <person name="Zannini L."/>
        </authorList>
    </citation>
    <scope>FUNCTION</scope>
    <scope>INTERACTION WITH CCAR2 AND SIRT1</scope>
</reference>
<reference key="42">
    <citation type="journal article" date="2020" name="J. Mol. Biol.">
        <title>The Viral SUMO-Targeted Ubiquitin Ligase ICP0 is Phosphorylated and Activated by Host Kinase Chk2.</title>
        <authorList>
            <person name="Hembram D.S.S."/>
            <person name="Negi H."/>
            <person name="Biswas P."/>
            <person name="Tripathi V."/>
            <person name="Bhushan L."/>
            <person name="Shet D."/>
            <person name="Kumar V."/>
            <person name="Das R."/>
        </authorList>
    </citation>
    <scope>FUNCTION (MICROBIAL INFECTION)</scope>
</reference>
<reference key="43">
    <citation type="journal article" date="2023" name="Cell Rep.">
        <title>ATM-CHK2-TRIM32 axis regulates ATG7 ubiquitination to initiate autophagy under oxidative stress.</title>
        <authorList>
            <person name="Liu J."/>
            <person name="Lu S."/>
            <person name="Zheng L."/>
            <person name="Guo Q."/>
            <person name="Cao L."/>
            <person name="Xiao Y."/>
            <person name="Chen D."/>
            <person name="Zou Y."/>
            <person name="Liu X."/>
            <person name="Deng C."/>
            <person name="Zhang S."/>
            <person name="Yang R."/>
            <person name="Wang Y."/>
            <person name="Zhang Y."/>
            <person name="Zhang N."/>
            <person name="Song X."/>
            <person name="Xing C."/>
            <person name="Wang Z."/>
            <person name="Cao L."/>
        </authorList>
    </citation>
    <scope>FUNCTION</scope>
    <scope>CATALYTIC ACTIVITY</scope>
</reference>
<reference key="44">
    <citation type="journal article" date="2002" name="Mol. Cell">
        <title>Structural and functional versatility of the FHA domain in DNA-damage signaling by the tumor suppressor kinase Chk2.</title>
        <authorList>
            <person name="Li J."/>
            <person name="Williams B.L."/>
            <person name="Haire L.F."/>
            <person name="Goldberg M."/>
            <person name="Wilker E."/>
            <person name="Durocher D."/>
            <person name="Yaffe M.B."/>
            <person name="Jackson S.P."/>
            <person name="Smerdon S.J."/>
        </authorList>
    </citation>
    <scope>X-RAY CRYSTALLOGRAPHY (2.7 ANGSTROMS) OF 64-212</scope>
</reference>
<reference key="45">
    <citation type="journal article" date="2006" name="EMBO J.">
        <title>Trans-activation of the DNA-damage signalling protein kinase Chk2 by T-loop exchange.</title>
        <authorList>
            <person name="Oliver A.W."/>
            <person name="Paul A."/>
            <person name="Boxall K.J."/>
            <person name="Barrie S.E."/>
            <person name="Aherne G.W."/>
            <person name="Garrett M.D."/>
            <person name="Mittnacht S."/>
            <person name="Pearl L.H."/>
        </authorList>
    </citation>
    <scope>X-RAY CRYSTALLOGRAPHY (2.25 ANGSTROMS) OF 210-531 IN COMPLEX WITH ADP AND INHIBITOR</scope>
    <scope>HOMODIMERIZATION</scope>
    <scope>AUTOPHOSPHORYLATION</scope>
</reference>
<reference key="46">
    <citation type="journal article" date="2009" name="Mol. Cell">
        <title>Structure and activation mechanism of the CHK2 DNA damage checkpoint kinase.</title>
        <authorList>
            <person name="Cai Z."/>
            <person name="Chehab N.H."/>
            <person name="Pavletich N.P."/>
        </authorList>
    </citation>
    <scope>X-RAY CRYSTALLOGRAPHY (3.00 ANGSTROMS) OF 84-502 OF HOMODIMER</scope>
</reference>
<reference key="47">
    <citation type="journal article" date="2014" name="J. Biol. Chem.">
        <title>Collaborator of ARF (CARF) regulates proliferative fate of human cells by dose-dependent regulation of DNA damage signaling.</title>
        <authorList>
            <person name="Cheung C.T."/>
            <person name="Singh R."/>
            <person name="Kalra R.S."/>
            <person name="Kaul S.C."/>
            <person name="Wadhwa R."/>
        </authorList>
    </citation>
    <scope>INTERACTION WITH CDKN2AIP</scope>
</reference>
<reference key="48">
    <citation type="journal article" date="1999" name="Science">
        <title>Heterozygous germ line hCHK2 mutations in Li-Fraumeni syndrome.</title>
        <authorList>
            <person name="Bell D.W."/>
            <person name="Varley J.M."/>
            <person name="Szydlo T.E."/>
            <person name="Kang D.H."/>
            <person name="Wahrer D.C.R."/>
            <person name="Shannon K.E."/>
            <person name="Lubratovich M."/>
            <person name="Versalis S.J."/>
            <person name="Isselbacher K.J."/>
            <person name="Fraumeni J.F. Jr."/>
            <person name="Birch J.M."/>
            <person name="Li F.P."/>
            <person name="Garber J.E."/>
            <person name="Haber D.A."/>
        </authorList>
    </citation>
    <scope>VARIANT THR-157</scope>
    <scope>VARIANT COLON CANCER TRP-145</scope>
</reference>
<reference key="49">
    <citation type="journal article" date="2001" name="Br. J. Cancer">
        <title>Mutation analysis of the CHK2 gene in families with hereditary breast cancer.</title>
        <authorList>
            <person name="Allinen M."/>
            <person name="Huusko P."/>
            <person name="Maentyniemi S."/>
            <person name="Launonen V."/>
            <person name="Winqvist R."/>
        </authorList>
    </citation>
    <scope>VARIANT THR-157</scope>
</reference>
<reference key="50">
    <citation type="journal article" date="2001" name="Cancer Res.">
        <title>Destabilization of CHK2 by a missense mutation associated with Li-Fraumeni Syndrome.</title>
        <authorList>
            <person name="Lee S.B."/>
            <person name="Kim S.H."/>
            <person name="Bell D.W."/>
            <person name="Wahrer D.C.R."/>
            <person name="Schiripo T.A."/>
            <person name="Jorczak M.M."/>
            <person name="Sgroi D.C."/>
            <person name="Garber J.E."/>
            <person name="Li F.P."/>
            <person name="Nichols K.E."/>
            <person name="Varley J.M."/>
            <person name="Godwin A.K."/>
            <person name="Shannon K.M."/>
            <person name="Harlow E."/>
            <person name="Haber D.A."/>
        </authorList>
    </citation>
    <scope>VARIANT TPDS4 TRP-145</scope>
</reference>
<reference key="51">
    <citation type="journal article" date="2002" name="Breast Cancer Res.">
        <title>Mutation analysis of the CHK2 gene in breast carcinoma and other cancers.</title>
        <authorList>
            <person name="Ingvarsson S."/>
            <person name="Sigbjornsdottir B.I."/>
            <person name="Huiping C."/>
            <person name="Hafsteinsdottir S.H."/>
            <person name="Ragnarsson G."/>
            <person name="Barkardottir R.B."/>
            <person name="Arason A."/>
            <person name="Egilsson V."/>
            <person name="Bergthorsson J.T."/>
        </authorList>
    </citation>
    <scope>VARIANT MULTIPLE CANCERS LYS-59</scope>
</reference>
<reference key="52">
    <citation type="journal article" date="2002" name="Br. J. Cancer">
        <title>CHEK2 variants in susceptibility to breast cancer and evidence of retention of the wild type allele in tumours.</title>
        <authorList>
            <person name="Sodha N."/>
            <person name="Bullock S."/>
            <person name="Taylor R."/>
            <person name="Mitchell G."/>
            <person name="Guertl-Lackner B."/>
            <person name="Williams R.D."/>
            <person name="Bevan S."/>
            <person name="Bishop K."/>
            <person name="McGuire S."/>
            <person name="Houlston R.S."/>
            <person name="Eeles R.A."/>
        </authorList>
    </citation>
    <scope>VARIANT BC GLY-117</scope>
    <scope>VARIANTS GLN-137 AND HIS-180</scope>
</reference>
<reference key="53">
    <citation type="journal article" date="2002" name="Genes Chromosomes Cancer">
        <title>Mutations of the CHK2 gene are found in some osteosarcomas, but are rare in breast, lung, and ovarian tumors.</title>
        <authorList>
            <person name="Miller C.W."/>
            <person name="Ikezoe T."/>
            <person name="Krug U."/>
            <person name="Hofmann W.K."/>
            <person name="Tavor S."/>
            <person name="Vegesna V."/>
            <person name="Tsukasaki K."/>
            <person name="Takeuchi S."/>
            <person name="Koeffler H.P."/>
        </authorList>
    </citation>
    <scope>VARIANTS SER-17 AND LEU-85</scope>
    <scope>INVOLVEMENT IN OSRC</scope>
</reference>
<reference key="54">
    <citation type="journal article" date="2003" name="Am. J. Hum. Genet.">
        <title>Mutations in CHEK2 associated with prostate cancer risk.</title>
        <authorList>
            <person name="Dong X."/>
            <person name="Wang L."/>
            <person name="Taniguchi K."/>
            <person name="Wang X."/>
            <person name="Cunningham J.M."/>
            <person name="McDonnell S.K."/>
            <person name="Qian C."/>
            <person name="Marks A.F."/>
            <person name="Slager S.L."/>
            <person name="Peterson B.J."/>
            <person name="Smith D.I."/>
            <person name="Cheville J.C."/>
            <person name="Blute M.L."/>
            <person name="Jacobsen S.J."/>
            <person name="Schaid D.J."/>
            <person name="Tindall D.J."/>
            <person name="Thibodeau S.N."/>
            <person name="Liu W."/>
        </authorList>
    </citation>
    <scope>VARIANTS PROSTATE CANCER LYS-64; PRO-145; ARG-167; CYS-180; HIS-180; CYS-181; HIS-181; LYS-239; PHE-251; HIS-318; PRO-323; CYS-327 AND LYS-476</scope>
    <scope>VARIANT THR-157</scope>
</reference>
<reference key="55">
    <citation type="journal article" date="2003" name="Am. J. Hum. Genet.">
        <title>Variants in CHEK2 other than 1100delC do not make a major contribution to breast cancer susceptibility.</title>
        <authorList>
            <person name="Schutte M."/>
            <person name="Seal S."/>
            <person name="Barfoot R."/>
            <person name="Meijers-Heijboer H."/>
            <person name="Wasielewski M."/>
            <person name="Evans D.G."/>
            <person name="Eccles D."/>
            <person name="Meijers C."/>
            <person name="Lohman F."/>
            <person name="Klijn J."/>
            <person name="van den Ouweland A."/>
            <person name="Brady A."/>
            <person name="Cole T."/>
            <person name="Collins A."/>
            <person name="Cox H."/>
            <person name="Donaldson A."/>
            <person name="Eeles R."/>
            <person name="Evans G."/>
            <person name="Gregory H."/>
            <person name="Gray J."/>
            <person name="Houlston R."/>
            <person name="Lalloo F."/>
            <person name="Lucassen A."/>
            <person name="Mackay J."/>
            <person name="Mitchell G."/>
            <person name="Morrison P."/>
            <person name="Murday V."/>
            <person name="Narod S."/>
            <person name="Patterson J."/>
            <person name="Peretz T."/>
            <person name="Phelan C.M."/>
            <person name="Rogers M."/>
            <person name="Schofield A."/>
            <person name="Tonin P."/>
            <person name="Weber B."/>
            <person name="Weber W."/>
            <person name="Futreal P.A."/>
            <person name="Nathanson K.L."/>
            <person name="Weber B.L."/>
            <person name="Easton D.F."/>
            <person name="Stratton M.R."/>
            <person name="Rahman N."/>
        </authorList>
    </citation>
    <scope>VARIANT BC GLY-117</scope>
    <scope>VARIANTS TRP-145 AND THR-157</scope>
</reference>
<reference key="56">
    <citation type="journal article" date="2003" name="Br. J. Cancer">
        <title>CHEK2 variants associate with hereditary prostate cancer.</title>
        <authorList>
            <person name="Seppaelae E.H."/>
            <person name="Ikonen T."/>
            <person name="Mononen N."/>
            <person name="Autio V."/>
            <person name="Roekman A."/>
            <person name="Matikainen M.P."/>
            <person name="Tammela T.L.J."/>
            <person name="Schleutker J."/>
        </authorList>
    </citation>
    <scope>VARIANT THR-157</scope>
</reference>
<reference key="57">
    <citation type="journal article" date="2004" name="Am. J. Hum. Genet.">
        <title>CHEK2 is a multiorgan cancer susceptibility gene.</title>
        <authorList>
            <person name="Cybulski C."/>
            <person name="Gorski B."/>
            <person name="Huzarski T."/>
            <person name="Masojc B."/>
            <person name="Mierzejewski M."/>
            <person name="Debniak T."/>
            <person name="Teodorczyk U."/>
            <person name="Byrski T."/>
            <person name="Gronwald J."/>
            <person name="Matyjasik J."/>
            <person name="Zlowocka E."/>
            <person name="Lenner M."/>
            <person name="Grabowska E."/>
            <person name="Nej K."/>
            <person name="Castaneda J."/>
            <person name="Medrek K."/>
            <person name="Szymanska A."/>
            <person name="Szymanska J."/>
            <person name="Kurzawski G."/>
            <person name="Suchy J."/>
            <person name="Oszurek O."/>
            <person name="Witek A."/>
            <person name="Narod S.A."/>
            <person name="Lubinski J."/>
        </authorList>
    </citation>
    <scope>VARIANT THR-157</scope>
</reference>
<reference key="58">
    <citation type="journal article" date="2004" name="Breast Cancer Res.">
        <title>Frequency of CHEK2 mutations in a population based, case-control study of breast cancer in young women.</title>
        <authorList>
            <person name="Friedrichsen D.M."/>
            <person name="Malone K.E."/>
            <person name="Doody D.R."/>
            <person name="Daling J.R."/>
            <person name="Ostrander E.A."/>
        </authorList>
    </citation>
    <scope>VARIANTS TRP-145 AND THR-157</scope>
</reference>
<reference key="59">
    <citation type="journal article" date="2004" name="Cancer Res.">
        <title>A novel founder CHEK2 mutation is associated with increased prostate cancer risk.</title>
        <authorList>
            <person name="Cybulski C."/>
            <person name="Huzarski T."/>
            <person name="Gorski B."/>
            <person name="Masojc B."/>
            <person name="Mierzejewski M."/>
            <person name="Debniak T."/>
            <person name="Gliniewicz B."/>
            <person name="Matyjasik J."/>
            <person name="Zlowocka E."/>
            <person name="Kurzawski G."/>
            <person name="Sikorski A."/>
            <person name="Posmyk M."/>
            <person name="Szwiec M."/>
            <person name="Czajka R."/>
            <person name="Narod S.A."/>
            <person name="Lubinski J."/>
        </authorList>
    </citation>
    <scope>VARIANT THR-157</scope>
</reference>
<reference key="60">
    <citation type="journal article" date="2004" name="Int. J. Cancer">
        <title>Limited relevance of the CHEK2 gene in hereditary breast cancer.</title>
        <authorList>
            <person name="Dufault M.R."/>
            <person name="Betz B."/>
            <person name="Wappenschmidt B."/>
            <person name="Hofmann W."/>
            <person name="Bandick K."/>
            <person name="Golla A."/>
            <person name="Pietschmann A."/>
            <person name="Nestle-Kraemling C."/>
            <person name="Rhiem K."/>
            <person name="Huettner C."/>
            <person name="von Lindern C."/>
            <person name="Dall P."/>
            <person name="Kiechle M."/>
            <person name="Untch M."/>
            <person name="Jonat W."/>
            <person name="Meindl A."/>
            <person name="Scherneck S."/>
            <person name="Niederacher D."/>
            <person name="Schmutzler R.K."/>
            <person name="Arnold N."/>
        </authorList>
    </citation>
    <scope>VARIANT THR-157</scope>
</reference>
<reference key="61">
    <citation type="journal article" date="2004" name="Int. J. Cancer">
        <title>CHEK2 variant I157T may be associated with increased breast cancer risk.</title>
        <authorList>
            <person name="Kilpivaara O."/>
            <person name="Vahteristo P."/>
            <person name="Falck J."/>
            <person name="Syrjaekoski K."/>
            <person name="Eerola H."/>
            <person name="Easton D."/>
            <person name="Bartkova J."/>
            <person name="Lukas J."/>
            <person name="Heikkilae P."/>
            <person name="Aittomaeki K."/>
            <person name="Holli K."/>
            <person name="Blomqvist C."/>
            <person name="Kallioniemi O.-P."/>
            <person name="Bartek J."/>
            <person name="Nevanlinna H."/>
        </authorList>
    </citation>
    <scope>VARIANT THR-157</scope>
</reference>
<reference key="62">
    <citation type="journal article" date="2005" name="Hum. Mol. Genet.">
        <title>Functional and genomic approaches reveal an ancient CHEK2 allele associated with breast cancer in the Ashkenazi Jewish population.</title>
        <authorList>
            <person name="Shaag A."/>
            <person name="Walsh T."/>
            <person name="Renbaum P."/>
            <person name="Kirchhoff T."/>
            <person name="Nafa K."/>
            <person name="Shiovitz S."/>
            <person name="Mandell J.B."/>
            <person name="Welcsh P."/>
            <person name="Lee M.K."/>
            <person name="Ellis N."/>
            <person name="Offit K."/>
            <person name="Levy-Lahad E."/>
            <person name="King M.-C."/>
        </authorList>
    </citation>
    <scope>VARIANTS LEU-85 AND PHE-428</scope>
</reference>
<reference key="63">
    <citation type="journal article" date="2005" name="Int. J. Cancer">
        <title>Association of two mutations in the CHEK2 gene with breast cancer.</title>
        <authorList>
            <person name="Bogdanova N."/>
            <person name="Enbetaen-Dubrowinskaja N."/>
            <person name="Feshchenko S."/>
            <person name="Lazjuk G.I."/>
            <person name="Rogov Y.I."/>
            <person name="Dammann O."/>
            <person name="Bremer M."/>
            <person name="Karstens J.H."/>
            <person name="Sohn C."/>
            <person name="Doerk T."/>
        </authorList>
    </citation>
    <scope>VARIANT THR-157</scope>
</reference>
<reference key="64">
    <citation type="journal article" date="2005" name="J. Pathol.">
        <title>Homozygosity for a CHEK2*1100delC mutation identified in familial colorectal cancer does not lead to a severe clinical phenotype.</title>
        <authorList>
            <person name="van Puijenbroek M."/>
            <person name="van Asperen C.J."/>
            <person name="van Mil A."/>
            <person name="Devilee P."/>
            <person name="van Wezel T."/>
            <person name="Morreau H."/>
        </authorList>
    </citation>
    <scope>VARIANT BC GLY-117</scope>
    <scope>VARIANTS GLN-137; TRP-145; THR-157 AND HIS-180</scope>
</reference>
<reference key="65">
    <citation type="journal article" date="2015" name="Oncogene">
        <title>A novel recurrent CHEK2 Y390C mutation identified in high-risk Chinese breast cancer patients impairs its activity and is associated with increased breast cancer risk.</title>
        <authorList>
            <person name="Wang N."/>
            <person name="Ding H."/>
            <person name="Liu C."/>
            <person name="Li X."/>
            <person name="Wei L."/>
            <person name="Yu J."/>
            <person name="Liu M."/>
            <person name="Ying M."/>
            <person name="Gao W."/>
            <person name="Jiang H."/>
            <person name="Wang Y."/>
        </authorList>
    </citation>
    <scope>VARIANT BC CYS-390</scope>
    <scope>CHARACTERIZATION OF VARIANT BC CYS-390</scope>
    <scope>FUNCTION</scope>
</reference>
<comment type="function">
    <text evidence="1 5 7 9 18 21 23 24 35 39 40 41 42 43 44 46 49 50 52 53 54">Serine/threonine-protein kinase which is required for checkpoint-mediated cell cycle arrest, activation of DNA repair and apoptosis in response to the presence of DNA double-strand breaks. May also negatively regulate cell cycle progression during unperturbed cell cycles. Following activation, phosphorylates numerous effectors preferentially at the consensus sequence [L-X-R-X-X-S/T] (PubMed:37943659). Regulates cell cycle checkpoint arrest through phosphorylation of CDC25A, CDC25B and CDC25C, inhibiting their activity. Inhibition of CDC25 phosphatase activity leads to increased inhibitory tyrosine phosphorylation of CDK-cyclin complexes and blocks cell cycle progression. May also phosphorylate NEK6 which is involved in G2/M cell cycle arrest. Regulates DNA repair through phosphorylation of BRCA2, enhancing the association of RAD51 with chromatin which promotes DNA repair by homologous recombination. Also stimulates the transcription of genes involved in DNA repair (including BRCA2) through the phosphorylation and activation of the transcription factor FOXM1. Regulates apoptosis through the phosphorylation of p53/TP53, MDM4 and PML. Phosphorylation of p53/TP53 at 'Ser-20' by CHEK2 may alleviate inhibition by MDM2, leading to accumulation of active p53/TP53. Phosphorylation of MDM4 may also reduce degradation of p53/TP53. Also controls the transcription of pro-apoptotic genes through phosphorylation of the transcription factor E2F1. Tumor suppressor, it may also have a DNA damage-independent function in mitotic spindle assembly by phosphorylating BRCA1. Its absence may be a cause of the chromosomal instability observed in some cancer cells. Promotes the CCAR2-SIRT1 association and is required for CCAR2-mediated SIRT1 inhibition (PubMed:25361978). Under oxidative stress, promotes ATG7 ubiquitination by phosphorylating the E3 ubiquitin ligase TRIM32 at 'Ser-55' leading to positive regulation of the autophagosme assembly (PubMed:37943659).</text>
</comment>
<comment type="function">
    <text evidence="51">(Microbial infection) Phosphorylates herpes simplex virus 1/HHV-1 protein ICP0 and thus activates its SUMO-targeted ubiquitin ligase activity.</text>
</comment>
<comment type="catalytic activity">
    <reaction evidence="52">
        <text>L-seryl-[protein] + ATP = O-phospho-L-seryl-[protein] + ADP + H(+)</text>
        <dbReference type="Rhea" id="RHEA:17989"/>
        <dbReference type="Rhea" id="RHEA-COMP:9863"/>
        <dbReference type="Rhea" id="RHEA-COMP:11604"/>
        <dbReference type="ChEBI" id="CHEBI:15378"/>
        <dbReference type="ChEBI" id="CHEBI:29999"/>
        <dbReference type="ChEBI" id="CHEBI:30616"/>
        <dbReference type="ChEBI" id="CHEBI:83421"/>
        <dbReference type="ChEBI" id="CHEBI:456216"/>
        <dbReference type="EC" id="2.7.11.1"/>
    </reaction>
</comment>
<comment type="catalytic activity">
    <reaction>
        <text>L-threonyl-[protein] + ATP = O-phospho-L-threonyl-[protein] + ADP + H(+)</text>
        <dbReference type="Rhea" id="RHEA:46608"/>
        <dbReference type="Rhea" id="RHEA-COMP:11060"/>
        <dbReference type="Rhea" id="RHEA-COMP:11605"/>
        <dbReference type="ChEBI" id="CHEBI:15378"/>
        <dbReference type="ChEBI" id="CHEBI:30013"/>
        <dbReference type="ChEBI" id="CHEBI:30616"/>
        <dbReference type="ChEBI" id="CHEBI:61977"/>
        <dbReference type="ChEBI" id="CHEBI:456216"/>
        <dbReference type="EC" id="2.7.11.1"/>
    </reaction>
</comment>
<comment type="cofactor">
    <cofactor>
        <name>Mg(2+)</name>
        <dbReference type="ChEBI" id="CHEBI:18420"/>
    </cofactor>
</comment>
<comment type="activity regulation">
    <text evidence="29">Activated through phosphorylation at Thr-68 by ATM in response to DNA double-strand breaks. Activation is modulated by several mediators including MDC1 and TP53BP1. Induces homodimerization with exchange of the T-loop/activation segment between protomers and transphosphorylation of the protomers. The autophosphorylated kinase dimer is fully active. Negatively regulated by PPM1D through dephosphorylation of Thr-68.</text>
</comment>
<comment type="subunit">
    <text evidence="7 9 17 21 24 38 43 48 49">Homodimer. Homodimerization is part of the activation process but the dimer may dissociate following activation. Interacts with PML. Interacts with TP53. Interacts with RB1; phosphorylates RB1. Interacts with BRCA1. Interacts (phosphorylated at Thr-68) with MDC1; requires ATM-mediated phosphorylation of CHEK2. Interacts with TP53BP1; modulates CHEK2 phosphorylation at Thr-68 in response to ionizing radiation. Interacts with CDC25A; phosphorylates CDC25A and mediates its degradation in response to ionizing radiation. Interacts with CUL1; mediates CHEK2 ubiquitination and regulation. Interacts with CDKN2AIP. Interacts (via protein kinase domain) with CCAR2 (via N-terminus). Interacts with SIRT1.</text>
</comment>
<comment type="interaction">
    <interactant intactId="EBI-1180783">
        <id>O96017</id>
    </interactant>
    <interactant intactId="EBI-372428">
        <id>Q9NY61</id>
        <label>AATF</label>
    </interactant>
    <organismsDiffer>false</organismsDiffer>
    <experiments>4</experiments>
</comment>
<comment type="interaction">
    <interactant intactId="EBI-1180783">
        <id>O96017</id>
    </interactant>
    <interactant intactId="EBI-11579223">
        <id>Q9UQ88-1</id>
        <label>CDK11A</label>
    </interactant>
    <organismsDiffer>false</organismsDiffer>
    <experiments>2</experiments>
</comment>
<comment type="interaction">
    <interactant intactId="EBI-1180783">
        <id>O96017</id>
    </interactant>
    <interactant intactId="EBI-1180783">
        <id>O96017</id>
        <label>CHEK2</label>
    </interactant>
    <organismsDiffer>false</organismsDiffer>
    <experiments>6</experiments>
</comment>
<comment type="interaction">
    <interactant intactId="EBI-1180783">
        <id>O96017</id>
    </interactant>
    <interactant intactId="EBI-747491">
        <id>Q9Y248</id>
        <label>GINS2</label>
    </interactant>
    <organismsDiffer>false</organismsDiffer>
    <experiments>2</experiments>
</comment>
<comment type="interaction">
    <interactant intactId="EBI-1180783">
        <id>O96017</id>
    </interactant>
    <interactant intactId="EBI-3915542">
        <id>Q13007</id>
        <label>IL24</label>
    </interactant>
    <organismsDiffer>false</organismsDiffer>
    <experiments>3</experiments>
</comment>
<comment type="interaction">
    <interactant intactId="EBI-1180783">
        <id>O96017</id>
    </interactant>
    <interactant intactId="EBI-9057780">
        <id>Q96KN1</id>
        <label>LRATD2</label>
    </interactant>
    <organismsDiffer>false</organismsDiffer>
    <experiments>3</experiments>
</comment>
<comment type="interaction">
    <interactant intactId="EBI-1180783">
        <id>O96017</id>
    </interactant>
    <interactant intactId="EBI-2827813">
        <id>P56645</id>
        <label>PER3</label>
    </interactant>
    <organismsDiffer>false</organismsDiffer>
    <experiments>2</experiments>
</comment>
<comment type="interaction">
    <interactant intactId="EBI-1180783">
        <id>O96017</id>
    </interactant>
    <interactant intactId="EBI-476768">
        <id>P53350</id>
        <label>PLK1</label>
    </interactant>
    <organismsDiffer>false</organismsDiffer>
    <experiments>7</experiments>
</comment>
<comment type="interaction">
    <interactant intactId="EBI-1180783">
        <id>O96017</id>
    </interactant>
    <interactant intactId="EBI-725702">
        <id>O15355</id>
        <label>PPM1G</label>
    </interactant>
    <organismsDiffer>false</organismsDiffer>
    <experiments>2</experiments>
</comment>
<comment type="interaction">
    <interactant intactId="EBI-1180783">
        <id>O96017</id>
    </interactant>
    <interactant intactId="EBI-641666">
        <id>Q15172</id>
        <label>PPP2R5A</label>
    </interactant>
    <organismsDiffer>false</organismsDiffer>
    <experiments>3</experiments>
</comment>
<comment type="interaction">
    <interactant intactId="EBI-1180783">
        <id>O96017</id>
    </interactant>
    <interactant intactId="EBI-1369497">
        <id>Q15173</id>
        <label>PPP2R5B</label>
    </interactant>
    <organismsDiffer>false</organismsDiffer>
    <experiments>2</experiments>
</comment>
<comment type="interaction">
    <interactant intactId="EBI-1180783">
        <id>O96017</id>
    </interactant>
    <interactant intactId="EBI-1266170">
        <id>Q13362-1</id>
        <label>PPP2R5C</label>
    </interactant>
    <organismsDiffer>false</organismsDiffer>
    <experiments>3</experiments>
</comment>
<comment type="interaction">
    <interactant intactId="EBI-1180783">
        <id>O96017</id>
    </interactant>
    <interactant intactId="EBI-1266173">
        <id>Q13362-2</id>
        <label>PPP2R5C</label>
    </interactant>
    <organismsDiffer>false</organismsDiffer>
    <experiments>2</experiments>
</comment>
<comment type="interaction">
    <interactant intactId="EBI-1180783">
        <id>O96017</id>
    </interactant>
    <interactant intactId="EBI-1266176">
        <id>Q13362-3</id>
        <label>PPP2R5C</label>
    </interactant>
    <organismsDiffer>false</organismsDiffer>
    <experiments>4</experiments>
</comment>
<comment type="interaction">
    <interactant intactId="EBI-1180783">
        <id>O96017</id>
    </interactant>
    <interactant intactId="EBI-968374">
        <id>Q16537</id>
        <label>PPP2R5E</label>
    </interactant>
    <organismsDiffer>false</organismsDiffer>
    <experiments>3</experiments>
</comment>
<comment type="interaction">
    <interactant intactId="EBI-1180783">
        <id>O96017</id>
    </interactant>
    <interactant intactId="EBI-491274">
        <id>P06400</id>
        <label>RB1</label>
    </interactant>
    <organismsDiffer>false</organismsDiffer>
    <experiments>3</experiments>
</comment>
<comment type="interaction">
    <interactant intactId="EBI-1180783">
        <id>O96017</id>
    </interactant>
    <interactant intactId="EBI-2372238">
        <id>Q5VTR2</id>
        <label>RNF20</label>
    </interactant>
    <organismsDiffer>false</organismsDiffer>
    <experiments>3</experiments>
</comment>
<comment type="interaction">
    <interactant intactId="EBI-1180783">
        <id>O96017</id>
    </interactant>
    <interactant intactId="EBI-302474">
        <id>Q93009</id>
        <label>USP7</label>
    </interactant>
    <organismsDiffer>false</organismsDiffer>
    <experiments>2</experiments>
</comment>
<comment type="interaction">
    <interactant intactId="EBI-1180783">
        <id>O96017</id>
    </interactant>
    <interactant intactId="EBI-355164">
        <id>P55072</id>
        <label>VCP</label>
    </interactant>
    <organismsDiffer>false</organismsDiffer>
    <experiments>2</experiments>
</comment>
<comment type="interaction">
    <interactant intactId="EBI-1180783">
        <id>O96017</id>
    </interactant>
    <interactant intactId="EBI-947466">
        <id>P18887</id>
        <label>XRCC1</label>
    </interactant>
    <organismsDiffer>false</organismsDiffer>
    <experiments>8</experiments>
</comment>
<comment type="interaction">
    <interactant intactId="EBI-1180783">
        <id>O96017</id>
    </interactant>
    <interactant intactId="EBI-25487926">
        <id>PRO_0000037319</id>
        <label>rep</label>
        <dbReference type="UniProtKB" id="P0C6X7"/>
    </interactant>
    <organismsDiffer>true</organismsDiffer>
    <experiments>2</experiments>
</comment>
<comment type="interaction">
    <interactant intactId="EBI-1180783">
        <id>O96017</id>
    </interactant>
    <interactant intactId="EBI-9545359">
        <id>P06725</id>
        <label>UL83</label>
    </interactant>
    <organismsDiffer>true</organismsDiffer>
    <experiments>2</experiments>
</comment>
<comment type="interaction">
    <interactant intactId="EBI-1180783">
        <id>O96017</id>
    </interactant>
    <interactant intactId="EBI-6904388">
        <id>PRO_0000037577</id>
        <dbReference type="UniProtKB" id="P27958"/>
    </interactant>
    <organismsDiffer>true</organismsDiffer>
    <experiments>3</experiments>
</comment>
<comment type="subcellular location">
    <molecule>Isoform 2</molecule>
    <subcellularLocation>
        <location>Nucleus</location>
    </subcellularLocation>
    <text>Isoform 10 is present throughout the cell.</text>
</comment>
<comment type="subcellular location">
    <molecule>Isoform 4</molecule>
    <subcellularLocation>
        <location>Nucleus</location>
    </subcellularLocation>
</comment>
<comment type="subcellular location">
    <molecule>Isoform 7</molecule>
    <subcellularLocation>
        <location>Nucleus</location>
    </subcellularLocation>
</comment>
<comment type="subcellular location">
    <molecule>Isoform 9</molecule>
    <subcellularLocation>
        <location>Nucleus</location>
    </subcellularLocation>
</comment>
<comment type="subcellular location">
    <molecule>Isoform 12</molecule>
    <subcellularLocation>
        <location>Nucleus</location>
    </subcellularLocation>
</comment>
<comment type="subcellular location">
    <subcellularLocation>
        <location>Nucleus</location>
        <location>PML body</location>
    </subcellularLocation>
    <subcellularLocation>
        <location>Nucleus</location>
        <location>Nucleoplasm</location>
    </subcellularLocation>
    <text>Recruited into PML bodies together with TP53.</text>
</comment>
<comment type="alternative products">
    <event type="alternative splicing"/>
    <isoform>
        <id>O96017-1</id>
        <name>1</name>
        <sequence type="displayed"/>
    </isoform>
    <isoform>
        <id>O96017-2</id>
        <name>2</name>
        <name>ins2</name>
        <sequence type="described" ref="VSP_014564 VSP_014567 VSP_014568"/>
    </isoform>
    <isoform>
        <id>O96017-3</id>
        <name>3</name>
        <name>del2-12</name>
        <sequence type="described" ref="VSP_014559"/>
    </isoform>
    <isoform>
        <id>O96017-4</id>
        <name>4</name>
        <name>del2-3</name>
        <sequence type="described" ref="VSP_014558"/>
    </isoform>
    <isoform>
        <id>O96017-5</id>
        <name>5</name>
        <name>del4</name>
        <sequence type="described" ref="VSP_014565 VSP_014566"/>
    </isoform>
    <isoform>
        <id>O96017-6</id>
        <name>6</name>
        <name>sub3</name>
        <sequence type="described" ref="VSP_014562 VSP_014563"/>
    </isoform>
    <isoform>
        <id>O96017-7</id>
        <name>7</name>
        <name>del9-12</name>
        <sequence type="described" ref="VSP_014572 VSP_014573"/>
    </isoform>
    <isoform>
        <id>O96017-8</id>
        <name>8</name>
        <name>del7</name>
        <sequence type="described" ref="VSP_014569 VSP_014570"/>
    </isoform>
    <isoform>
        <id>O96017-9</id>
        <name>9</name>
        <name>insx</name>
        <sequence type="described" ref="VSP_014557"/>
    </isoform>
    <isoform>
        <id>O96017-10</id>
        <name>10</name>
        <name>iso2</name>
        <sequence type="described" ref="VSP_014560 VSP_014561"/>
    </isoform>
    <isoform>
        <id>O96017-11</id>
        <name>11</name>
        <name>iso1</name>
        <sequence type="described" ref="VSP_014556"/>
    </isoform>
    <isoform>
        <id>O96017-12</id>
        <name>12</name>
        <name>del9</name>
        <sequence type="described" ref="VSP_014571"/>
    </isoform>
    <isoform>
        <id>O96017-13</id>
        <name>13</name>
        <sequence type="described" ref="VSP_045148"/>
    </isoform>
</comment>
<comment type="tissue specificity">
    <text>High expression is found in testis, spleen, colon and peripheral blood leukocytes. Low expression is found in other tissues.</text>
</comment>
<comment type="PTM">
    <text evidence="8 10 29 36 37 41 43 45">Phosphorylated. Phosphorylated at Ser-73 by PLK3 in response to DNA damage, promoting phosphorylation at Thr-68 by ATM and the G2/M transition checkpoint. Phosphorylation at Thr-68 induces homodimerization. Autophosphorylates at Thr-383 and Thr-387 in the T-loop/activation segment upon dimerization to become fully active and phosphorylate its substrates like for instance CDC25C. DNA damage-induced autophosphorylation at Ser-379 induces CUL1-mediated ubiquitination and regulates the pro-apoptotic function. Phosphorylation at Ser-456 also regulates ubiquitination. Phosphorylated by PLK4.</text>
</comment>
<comment type="PTM">
    <text>Ubiquitinated. CUL1-mediated ubiquitination regulates the pro-apoptotic function. Ubiquitination may also regulate protein stability. Ubiquitinated by RNF8 via 'Lys-48'-linked ubiquitination.</text>
</comment>
<comment type="disease" evidence="12">
    <disease id="DI-02882">
        <name>Tumor predisposition syndrome 4</name>
        <acronym>TPDS4</acronym>
        <description>A disorder characterized by an increased risk for developing various types of benign and/or malignant neoplasms that arise at an accelerated rate and in different organs.</description>
        <dbReference type="MIM" id="609265"/>
    </disease>
    <text>The disease is caused by variants affecting the gene represented in this entry.</text>
</comment>
<comment type="disease" evidence="20">
    <disease id="DI-02663">
        <name>Prostate cancer</name>
        <acronym>PC</acronym>
        <description>A malignancy originating in tissues of the prostate. Most prostate cancers are adenocarcinomas that develop in the acini of the prostatic ducts. Other rare histopathologic types of prostate cancer that occur in approximately 5% of patients include small cell carcinoma, mucinous carcinoma, prostatic ductal carcinoma, transitional cell carcinoma, squamous cell carcinoma, basal cell carcinoma, adenoid cystic carcinoma (basaloid), signet-ring cell carcinoma and neuroendocrine carcinoma.</description>
        <dbReference type="MIM" id="176807"/>
    </disease>
    <text>Disease susceptibility is associated with variants affecting the gene represented in this entry.</text>
</comment>
<comment type="disease" evidence="13">
    <disease id="DI-02109">
        <name>Osteogenic sarcoma</name>
        <acronym>OSRC</acronym>
        <description>A sarcoma originating in bone-forming cells, affecting the ends of long bones.</description>
        <dbReference type="MIM" id="259500"/>
    </disease>
    <text>The gene represented in this entry may be involved in disease pathogenesis.</text>
</comment>
<comment type="disease" evidence="16 19 22 34 47 50">
    <disease id="DI-02602">
        <name>Breast cancer</name>
        <acronym>BC</acronym>
        <description>A common malignancy originating from breast epithelial tissue. Breast neoplasms can be distinguished by their histologic pattern. Invasive ductal carcinoma is by far the most common type. Breast cancer is etiologically and genetically heterogeneous. Important genetic factors have been indicated by familial occurrence and bilateral involvement. Mutations at more than one locus can be involved in different families or even in the same case.</description>
        <dbReference type="MIM" id="114480"/>
    </disease>
    <text>Disease susceptibility is associated with variants affecting the gene represented in this entry.</text>
</comment>
<comment type="miscellaneous">
    <molecule>Isoform 2</molecule>
    <text evidence="61">Lacks enzymatic activity.</text>
</comment>
<comment type="miscellaneous">
    <molecule>Isoform 4</molecule>
    <text evidence="61">Lacks enzymatic activity.</text>
</comment>
<comment type="miscellaneous">
    <molecule>Isoform 7</molecule>
    <text evidence="61">Lacks enzymatic activity.</text>
</comment>
<comment type="miscellaneous">
    <molecule>Isoform 9</molecule>
    <text evidence="61">Retains low level of catalytic activity.</text>
</comment>
<comment type="miscellaneous">
    <molecule>Isoform 10</molecule>
    <text evidence="61">Lacks enzymatic activity.</text>
</comment>
<comment type="miscellaneous">
    <molecule>Isoform 12</molecule>
    <text evidence="61">Lacks enzymatic activity.</text>
</comment>
<comment type="similarity">
    <text evidence="61">Belongs to the protein kinase superfamily. CAMK Ser/Thr protein kinase family. CHK2 subfamily.</text>
</comment>
<comment type="online information" name="Atlas of Genetics and Cytogenetics in Oncology and Haematology">
    <link uri="https://atlasgeneticsoncology.org/gene/312/CHEK2"/>
</comment>
<proteinExistence type="evidence at protein level"/>
<sequence length="543" mass="60915">MSRESDVEAQQSHGSSACSQPHGSVTQSQGSSSQSQGISSSSTSTMPNSSQSSHSSSGTLSSLETVSTQELYSIPEDQEPEDQEPEEPTPAPWARLWALQDGFANLECVNDNYWFGRDKSCEYCFDEPLLKRTDKYRTYSKKHFRIFREVGPKNSYIAYIEDHSGNGTFVNTELVGKGKRRPLNNNSEIALSLSRNKVFVFFDLTVDDQSVYPKALRDEYIMSKTLGSGACGEVKLAFERKTCKKVAIKIISKRKFAIGSAREADPALNVETEIEILKKLNHPCIIKIKNFFDAEDYYIVLELMEGGELFDKVVGNKRLKEATCKLYFYQMLLAVQYLHENGIIHRDLKPENVLLSSQEEDCLIKITDFGHSKILGETSLMRTLCGTPTYLAPEVLVSVGTAGYNRAVDCWSLGVILFICLSGYPPFSEHRTQVSLKDQITSGKYNFIPEVWAEVSEKALDLVKKLLVVDPKARFTTEEALRHPWLQDEDMKRKFQDLLSEENESTALPQVLAQPSTSRKRPREGEAEGAETTKRPAVCAAVL</sequence>
<organism>
    <name type="scientific">Homo sapiens</name>
    <name type="common">Human</name>
    <dbReference type="NCBI Taxonomy" id="9606"/>
    <lineage>
        <taxon>Eukaryota</taxon>
        <taxon>Metazoa</taxon>
        <taxon>Chordata</taxon>
        <taxon>Craniata</taxon>
        <taxon>Vertebrata</taxon>
        <taxon>Euteleostomi</taxon>
        <taxon>Mammalia</taxon>
        <taxon>Eutheria</taxon>
        <taxon>Euarchontoglires</taxon>
        <taxon>Primates</taxon>
        <taxon>Haplorrhini</taxon>
        <taxon>Catarrhini</taxon>
        <taxon>Hominidae</taxon>
        <taxon>Homo</taxon>
    </lineage>
</organism>